<proteinExistence type="evidence at protein level"/>
<name>WWOX_HUMAN</name>
<dbReference type="EC" id="1.1.1.-"/>
<dbReference type="EMBL" id="AF211943">
    <property type="protein sequence ID" value="AAF27049.1"/>
    <property type="molecule type" value="mRNA"/>
</dbReference>
<dbReference type="EMBL" id="AF212843">
    <property type="protein sequence ID" value="AAF27050.1"/>
    <property type="molecule type" value="Genomic_DNA"/>
</dbReference>
<dbReference type="EMBL" id="AH009490">
    <property type="protein sequence ID" value="AAF78197.1"/>
    <property type="molecule type" value="Genomic_DNA"/>
</dbReference>
<dbReference type="EMBL" id="AF227526">
    <property type="protein sequence ID" value="AAF82053.1"/>
    <property type="molecule type" value="mRNA"/>
</dbReference>
<dbReference type="EMBL" id="AF227527">
    <property type="protein sequence ID" value="AAF82054.1"/>
    <property type="molecule type" value="mRNA"/>
</dbReference>
<dbReference type="EMBL" id="AF227528">
    <property type="protein sequence ID" value="AAF82055.1"/>
    <property type="molecule type" value="mRNA"/>
</dbReference>
<dbReference type="EMBL" id="AF227529">
    <property type="protein sequence ID" value="AAF82056.1"/>
    <property type="molecule type" value="mRNA"/>
</dbReference>
<dbReference type="EMBL" id="AF395123">
    <property type="protein sequence ID" value="AAK81727.1"/>
    <property type="molecule type" value="mRNA"/>
</dbReference>
<dbReference type="EMBL" id="AF395124">
    <property type="protein sequence ID" value="AAK81728.1"/>
    <property type="molecule type" value="mRNA"/>
</dbReference>
<dbReference type="EMBL" id="AF325432">
    <property type="protein sequence ID" value="AAL05449.1"/>
    <property type="molecule type" value="Genomic_DNA"/>
</dbReference>
<dbReference type="EMBL" id="AF325423">
    <property type="protein sequence ID" value="AAL05449.1"/>
    <property type="status" value="JOINED"/>
    <property type="molecule type" value="Genomic_DNA"/>
</dbReference>
<dbReference type="EMBL" id="AF325424">
    <property type="protein sequence ID" value="AAL05449.1"/>
    <property type="status" value="JOINED"/>
    <property type="molecule type" value="Genomic_DNA"/>
</dbReference>
<dbReference type="EMBL" id="AF325425">
    <property type="protein sequence ID" value="AAL05449.1"/>
    <property type="status" value="JOINED"/>
    <property type="molecule type" value="Genomic_DNA"/>
</dbReference>
<dbReference type="EMBL" id="AF325426">
    <property type="protein sequence ID" value="AAL05449.1"/>
    <property type="status" value="JOINED"/>
    <property type="molecule type" value="Genomic_DNA"/>
</dbReference>
<dbReference type="EMBL" id="AF325427">
    <property type="protein sequence ID" value="AAL05449.1"/>
    <property type="status" value="JOINED"/>
    <property type="molecule type" value="Genomic_DNA"/>
</dbReference>
<dbReference type="EMBL" id="AF325428">
    <property type="protein sequence ID" value="AAL05449.1"/>
    <property type="status" value="JOINED"/>
    <property type="molecule type" value="Genomic_DNA"/>
</dbReference>
<dbReference type="EMBL" id="AF325430">
    <property type="protein sequence ID" value="AAL05449.1"/>
    <property type="status" value="JOINED"/>
    <property type="molecule type" value="Genomic_DNA"/>
</dbReference>
<dbReference type="EMBL" id="AF325431">
    <property type="protein sequence ID" value="AAL05449.1"/>
    <property type="status" value="JOINED"/>
    <property type="molecule type" value="Genomic_DNA"/>
</dbReference>
<dbReference type="EMBL" id="AF325429">
    <property type="protein sequence ID" value="AAL05450.1"/>
    <property type="molecule type" value="Genomic_DNA"/>
</dbReference>
<dbReference type="EMBL" id="AF325423">
    <property type="protein sequence ID" value="AAL05450.1"/>
    <property type="status" value="JOINED"/>
    <property type="molecule type" value="Genomic_DNA"/>
</dbReference>
<dbReference type="EMBL" id="AF325424">
    <property type="protein sequence ID" value="AAL05450.1"/>
    <property type="status" value="JOINED"/>
    <property type="molecule type" value="Genomic_DNA"/>
</dbReference>
<dbReference type="EMBL" id="AF325425">
    <property type="protein sequence ID" value="AAL05450.1"/>
    <property type="status" value="JOINED"/>
    <property type="molecule type" value="Genomic_DNA"/>
</dbReference>
<dbReference type="EMBL" id="AF325426">
    <property type="protein sequence ID" value="AAL05450.1"/>
    <property type="status" value="JOINED"/>
    <property type="molecule type" value="Genomic_DNA"/>
</dbReference>
<dbReference type="EMBL" id="AF325427">
    <property type="protein sequence ID" value="AAL05450.1"/>
    <property type="status" value="JOINED"/>
    <property type="molecule type" value="Genomic_DNA"/>
</dbReference>
<dbReference type="EMBL" id="AF325432">
    <property type="protein sequence ID" value="AAL05451.1"/>
    <property type="molecule type" value="Genomic_DNA"/>
</dbReference>
<dbReference type="EMBL" id="AF325423">
    <property type="protein sequence ID" value="AAL05451.1"/>
    <property type="status" value="JOINED"/>
    <property type="molecule type" value="Genomic_DNA"/>
</dbReference>
<dbReference type="EMBL" id="AF325424">
    <property type="protein sequence ID" value="AAL05451.1"/>
    <property type="status" value="JOINED"/>
    <property type="molecule type" value="Genomic_DNA"/>
</dbReference>
<dbReference type="EMBL" id="AF325425">
    <property type="protein sequence ID" value="AAL05451.1"/>
    <property type="status" value="JOINED"/>
    <property type="molecule type" value="Genomic_DNA"/>
</dbReference>
<dbReference type="EMBL" id="AF325426">
    <property type="protein sequence ID" value="AAL05451.1"/>
    <property type="status" value="JOINED"/>
    <property type="molecule type" value="Genomic_DNA"/>
</dbReference>
<dbReference type="EMBL" id="AF325433">
    <property type="protein sequence ID" value="AAL05451.1"/>
    <property type="status" value="JOINED"/>
    <property type="molecule type" value="Genomic_DNA"/>
</dbReference>
<dbReference type="EMBL" id="AY256821">
    <property type="protein sequence ID" value="AAP94227.1"/>
    <property type="status" value="ALT_FRAME"/>
    <property type="molecule type" value="mRNA"/>
</dbReference>
<dbReference type="EMBL" id="AK290438">
    <property type="protein sequence ID" value="BAF83127.1"/>
    <property type="molecule type" value="mRNA"/>
</dbReference>
<dbReference type="EMBL" id="BT007445">
    <property type="protein sequence ID" value="AAP36113.1"/>
    <property type="molecule type" value="mRNA"/>
</dbReference>
<dbReference type="EMBL" id="BC003184">
    <property type="protein sequence ID" value="AAH03184.1"/>
    <property type="molecule type" value="mRNA"/>
</dbReference>
<dbReference type="CCDS" id="CCDS42196.1">
    <molecule id="Q9NZC7-1"/>
</dbReference>
<dbReference type="CCDS" id="CCDS42197.1">
    <molecule id="Q9NZC7-3"/>
</dbReference>
<dbReference type="RefSeq" id="NP_001278926.1">
    <property type="nucleotide sequence ID" value="NM_001291997.1"/>
</dbReference>
<dbReference type="RefSeq" id="NP_057457.1">
    <molecule id="Q9NZC7-1"/>
    <property type="nucleotide sequence ID" value="NM_016373.4"/>
</dbReference>
<dbReference type="RefSeq" id="NP_570607.1">
    <molecule id="Q9NZC7-3"/>
    <property type="nucleotide sequence ID" value="NM_130791.5"/>
</dbReference>
<dbReference type="PDB" id="1WMV">
    <property type="method" value="NMR"/>
    <property type="chains" value="A=51-101"/>
</dbReference>
<dbReference type="PDBsum" id="1WMV"/>
<dbReference type="SMR" id="Q9NZC7"/>
<dbReference type="BioGRID" id="119707">
    <property type="interactions" value="635"/>
</dbReference>
<dbReference type="CORUM" id="Q9NZC7"/>
<dbReference type="FunCoup" id="Q9NZC7">
    <property type="interactions" value="1428"/>
</dbReference>
<dbReference type="IntAct" id="Q9NZC7">
    <property type="interactions" value="171"/>
</dbReference>
<dbReference type="MINT" id="Q9NZC7"/>
<dbReference type="STRING" id="9606.ENSP00000457230"/>
<dbReference type="iPTMnet" id="Q9NZC7"/>
<dbReference type="PhosphoSitePlus" id="Q9NZC7"/>
<dbReference type="BioMuta" id="WWOX"/>
<dbReference type="DMDM" id="74725363"/>
<dbReference type="jPOST" id="Q9NZC7"/>
<dbReference type="MassIVE" id="Q9NZC7"/>
<dbReference type="PaxDb" id="9606-ENSP00000457230"/>
<dbReference type="PeptideAtlas" id="Q9NZC7"/>
<dbReference type="ProteomicsDB" id="83364">
    <molecule id="Q9NZC7-1"/>
</dbReference>
<dbReference type="ProteomicsDB" id="83365">
    <molecule id="Q9NZC7-2"/>
</dbReference>
<dbReference type="ProteomicsDB" id="83366">
    <molecule id="Q9NZC7-3"/>
</dbReference>
<dbReference type="ProteomicsDB" id="83367">
    <molecule id="Q9NZC7-4"/>
</dbReference>
<dbReference type="ProteomicsDB" id="83368">
    <molecule id="Q9NZC7-5"/>
</dbReference>
<dbReference type="ProteomicsDB" id="83369">
    <molecule id="Q9NZC7-6"/>
</dbReference>
<dbReference type="ProteomicsDB" id="83370">
    <molecule id="Q9NZC7-7"/>
</dbReference>
<dbReference type="Pumba" id="Q9NZC7"/>
<dbReference type="Antibodypedia" id="8291">
    <property type="antibodies" value="398 antibodies from 42 providers"/>
</dbReference>
<dbReference type="DNASU" id="51741"/>
<dbReference type="Ensembl" id="ENST00000355860.7">
    <molecule id="Q9NZC7-3"/>
    <property type="protein sequence ID" value="ENSP00000348119.3"/>
    <property type="gene ID" value="ENSG00000186153.19"/>
</dbReference>
<dbReference type="Ensembl" id="ENST00000402655.6">
    <molecule id="Q9NZC7-6"/>
    <property type="protein sequence ID" value="ENSP00000384238.2"/>
    <property type="gene ID" value="ENSG00000186153.19"/>
</dbReference>
<dbReference type="Ensembl" id="ENST00000406884.6">
    <molecule id="Q9NZC7-5"/>
    <property type="protein sequence ID" value="ENSP00000384495.2"/>
    <property type="gene ID" value="ENSG00000186153.19"/>
</dbReference>
<dbReference type="Ensembl" id="ENST00000408984.7">
    <molecule id="Q9NZC7-2"/>
    <property type="protein sequence ID" value="ENSP00000386161.3"/>
    <property type="gene ID" value="ENSG00000186153.19"/>
</dbReference>
<dbReference type="Ensembl" id="ENST00000566780.6">
    <molecule id="Q9NZC7-1"/>
    <property type="protein sequence ID" value="ENSP00000457230.1"/>
    <property type="gene ID" value="ENSG00000186153.19"/>
</dbReference>
<dbReference type="Ensembl" id="ENST00000569818.1">
    <molecule id="Q9NZC7-4"/>
    <property type="protein sequence ID" value="ENSP00000454485.1"/>
    <property type="gene ID" value="ENSG00000186153.19"/>
</dbReference>
<dbReference type="GeneID" id="51741"/>
<dbReference type="KEGG" id="hsa:51741"/>
<dbReference type="MANE-Select" id="ENST00000566780.6">
    <property type="protein sequence ID" value="ENSP00000457230.1"/>
    <property type="RefSeq nucleotide sequence ID" value="NM_016373.4"/>
    <property type="RefSeq protein sequence ID" value="NP_057457.1"/>
</dbReference>
<dbReference type="UCSC" id="uc002ffi.3">
    <molecule id="Q9NZC7-1"/>
    <property type="organism name" value="human"/>
</dbReference>
<dbReference type="AGR" id="HGNC:12799"/>
<dbReference type="CTD" id="51741"/>
<dbReference type="DisGeNET" id="51741"/>
<dbReference type="GeneCards" id="WWOX"/>
<dbReference type="HGNC" id="HGNC:12799">
    <property type="gene designation" value="WWOX"/>
</dbReference>
<dbReference type="HPA" id="ENSG00000186153">
    <property type="expression patterns" value="Low tissue specificity"/>
</dbReference>
<dbReference type="MalaCards" id="WWOX"/>
<dbReference type="MIM" id="133239">
    <property type="type" value="phenotype"/>
</dbReference>
<dbReference type="MIM" id="605131">
    <property type="type" value="gene"/>
</dbReference>
<dbReference type="MIM" id="614322">
    <property type="type" value="phenotype"/>
</dbReference>
<dbReference type="MIM" id="616211">
    <property type="type" value="phenotype"/>
</dbReference>
<dbReference type="neXtProt" id="NX_Q9NZC7"/>
<dbReference type="OpenTargets" id="ENSG00000186153"/>
<dbReference type="Orphanet" id="251510">
    <property type="disease" value="46,XY partial gonadal dysgenesis"/>
</dbReference>
<dbReference type="Orphanet" id="284282">
    <property type="disease" value="Autosomal recessive cerebellar ataxia-epilepsy-intellectual disability syndrome due to WWOX deficiency"/>
</dbReference>
<dbReference type="Orphanet" id="442835">
    <property type="disease" value="Non-specific early-onset epileptic encephalopathy"/>
</dbReference>
<dbReference type="Orphanet" id="99977">
    <property type="disease" value="Squamous cell carcinoma of the esophagus"/>
</dbReference>
<dbReference type="PharmGKB" id="PA37398"/>
<dbReference type="VEuPathDB" id="HostDB:ENSG00000186153"/>
<dbReference type="eggNOG" id="KOG1208">
    <property type="taxonomic scope" value="Eukaryota"/>
</dbReference>
<dbReference type="GeneTree" id="ENSGT00940000157389"/>
<dbReference type="HOGENOM" id="CLU_010194_44_0_1"/>
<dbReference type="InParanoid" id="Q9NZC7"/>
<dbReference type="OMA" id="PPAEKYW"/>
<dbReference type="OrthoDB" id="9989144at2759"/>
<dbReference type="PAN-GO" id="Q9NZC7">
    <property type="GO annotations" value="0 GO annotations based on evolutionary models"/>
</dbReference>
<dbReference type="PhylomeDB" id="Q9NZC7"/>
<dbReference type="TreeFam" id="TF105428"/>
<dbReference type="PathwayCommons" id="Q9NZC7"/>
<dbReference type="Reactome" id="R-HSA-1251985">
    <property type="pathway name" value="Nuclear signaling by ERBB4"/>
</dbReference>
<dbReference type="Reactome" id="R-HSA-8866904">
    <property type="pathway name" value="Negative regulation of activity of TFAP2 (AP-2) family transcription factors"/>
</dbReference>
<dbReference type="Reactome" id="R-HSA-8866907">
    <property type="pathway name" value="Activation of the TFAP2 (AP-2) family of transcription factors"/>
</dbReference>
<dbReference type="SignaLink" id="Q9NZC7"/>
<dbReference type="SIGNOR" id="Q9NZC7"/>
<dbReference type="BioGRID-ORCS" id="51741">
    <property type="hits" value="12 hits in 1160 CRISPR screens"/>
</dbReference>
<dbReference type="ChiTaRS" id="WWOX">
    <property type="organism name" value="human"/>
</dbReference>
<dbReference type="EvolutionaryTrace" id="Q9NZC7"/>
<dbReference type="GeneWiki" id="WWOX"/>
<dbReference type="GenomeRNAi" id="51741"/>
<dbReference type="Pharos" id="Q9NZC7">
    <property type="development level" value="Tbio"/>
</dbReference>
<dbReference type="PRO" id="PR:Q9NZC7"/>
<dbReference type="Proteomes" id="UP000005640">
    <property type="component" value="Chromosome 16"/>
</dbReference>
<dbReference type="RNAct" id="Q9NZC7">
    <property type="molecule type" value="protein"/>
</dbReference>
<dbReference type="Bgee" id="ENSG00000186153">
    <property type="expression patterns" value="Expressed in parotid gland and 201 other cell types or tissues"/>
</dbReference>
<dbReference type="ExpressionAtlas" id="Q9NZC7">
    <property type="expression patterns" value="baseline and differential"/>
</dbReference>
<dbReference type="GO" id="GO:0005737">
    <property type="term" value="C:cytoplasm"/>
    <property type="evidence" value="ECO:0000314"/>
    <property type="project" value="UniProtKB"/>
</dbReference>
<dbReference type="GO" id="GO:0005829">
    <property type="term" value="C:cytosol"/>
    <property type="evidence" value="ECO:0000314"/>
    <property type="project" value="BHF-UCL"/>
</dbReference>
<dbReference type="GO" id="GO:0005794">
    <property type="term" value="C:Golgi apparatus"/>
    <property type="evidence" value="ECO:0000314"/>
    <property type="project" value="UniProtKB"/>
</dbReference>
<dbReference type="GO" id="GO:0005764">
    <property type="term" value="C:lysosome"/>
    <property type="evidence" value="ECO:0007669"/>
    <property type="project" value="UniProtKB-SubCell"/>
</dbReference>
<dbReference type="GO" id="GO:0005739">
    <property type="term" value="C:mitochondrion"/>
    <property type="evidence" value="ECO:0000250"/>
    <property type="project" value="BHF-UCL"/>
</dbReference>
<dbReference type="GO" id="GO:0005634">
    <property type="term" value="C:nucleus"/>
    <property type="evidence" value="ECO:0000314"/>
    <property type="project" value="BHF-UCL"/>
</dbReference>
<dbReference type="GO" id="GO:0090575">
    <property type="term" value="C:RNA polymerase II transcription regulator complex"/>
    <property type="evidence" value="ECO:0000250"/>
    <property type="project" value="BHF-UCL"/>
</dbReference>
<dbReference type="GO" id="GO:0019899">
    <property type="term" value="F:enzyme binding"/>
    <property type="evidence" value="ECO:0000353"/>
    <property type="project" value="BHF-UCL"/>
</dbReference>
<dbReference type="GO" id="GO:0042802">
    <property type="term" value="F:identical protein binding"/>
    <property type="evidence" value="ECO:0000353"/>
    <property type="project" value="IntAct"/>
</dbReference>
<dbReference type="GO" id="GO:0016491">
    <property type="term" value="F:oxidoreductase activity"/>
    <property type="evidence" value="ECO:0000303"/>
    <property type="project" value="UniProtKB"/>
</dbReference>
<dbReference type="GO" id="GO:0003713">
    <property type="term" value="F:transcription coactivator activity"/>
    <property type="evidence" value="ECO:0007669"/>
    <property type="project" value="Ensembl"/>
</dbReference>
<dbReference type="GO" id="GO:0071560">
    <property type="term" value="P:cellular response to transforming growth factor beta stimulus"/>
    <property type="evidence" value="ECO:0000314"/>
    <property type="project" value="BHF-UCL"/>
</dbReference>
<dbReference type="GO" id="GO:0097191">
    <property type="term" value="P:extrinsic apoptotic signaling pathway"/>
    <property type="evidence" value="ECO:0007669"/>
    <property type="project" value="Ensembl"/>
</dbReference>
<dbReference type="GO" id="GO:0072332">
    <property type="term" value="P:intrinsic apoptotic signaling pathway by p53 class mediator"/>
    <property type="evidence" value="ECO:0007669"/>
    <property type="project" value="Ensembl"/>
</dbReference>
<dbReference type="GO" id="GO:0030178">
    <property type="term" value="P:negative regulation of Wnt signaling pathway"/>
    <property type="evidence" value="ECO:0000314"/>
    <property type="project" value="UniProtKB"/>
</dbReference>
<dbReference type="GO" id="GO:0001649">
    <property type="term" value="P:osteoblast differentiation"/>
    <property type="evidence" value="ECO:0007669"/>
    <property type="project" value="Ensembl"/>
</dbReference>
<dbReference type="GO" id="GO:2001238">
    <property type="term" value="P:positive regulation of extrinsic apoptotic signaling pathway"/>
    <property type="evidence" value="ECO:0000250"/>
    <property type="project" value="BHF-UCL"/>
</dbReference>
<dbReference type="GO" id="GO:2001241">
    <property type="term" value="P:positive regulation of extrinsic apoptotic signaling pathway in absence of ligand"/>
    <property type="evidence" value="ECO:0007669"/>
    <property type="project" value="Ensembl"/>
</dbReference>
<dbReference type="GO" id="GO:0045944">
    <property type="term" value="P:positive regulation of transcription by RNA polymerase II"/>
    <property type="evidence" value="ECO:0000250"/>
    <property type="project" value="BHF-UCL"/>
</dbReference>
<dbReference type="GO" id="GO:0048705">
    <property type="term" value="P:skeletal system morphogenesis"/>
    <property type="evidence" value="ECO:0000250"/>
    <property type="project" value="BHF-UCL"/>
</dbReference>
<dbReference type="GO" id="GO:0016055">
    <property type="term" value="P:Wnt signaling pathway"/>
    <property type="evidence" value="ECO:0007669"/>
    <property type="project" value="UniProtKB-KW"/>
</dbReference>
<dbReference type="CDD" id="cd09809">
    <property type="entry name" value="human_WWOX_like_SDR_c-like"/>
    <property type="match status" value="1"/>
</dbReference>
<dbReference type="CDD" id="cd00201">
    <property type="entry name" value="WW"/>
    <property type="match status" value="2"/>
</dbReference>
<dbReference type="FunFam" id="2.20.70.10:FF:000032">
    <property type="entry name" value="WW domain containing oxidoreductase"/>
    <property type="match status" value="1"/>
</dbReference>
<dbReference type="FunFam" id="2.20.70.10:FF:000040">
    <property type="entry name" value="WW domain containing oxidoreductase"/>
    <property type="match status" value="1"/>
</dbReference>
<dbReference type="FunFam" id="3.40.50.720:FF:000353">
    <property type="entry name" value="WW domain-containing oxidoreductase"/>
    <property type="match status" value="1"/>
</dbReference>
<dbReference type="Gene3D" id="2.20.70.10">
    <property type="match status" value="2"/>
</dbReference>
<dbReference type="Gene3D" id="3.40.50.720">
    <property type="entry name" value="NAD(P)-binding Rossmann-like Domain"/>
    <property type="match status" value="1"/>
</dbReference>
<dbReference type="InterPro" id="IPR036291">
    <property type="entry name" value="NAD(P)-bd_dom_sf"/>
</dbReference>
<dbReference type="InterPro" id="IPR002347">
    <property type="entry name" value="SDR_fam"/>
</dbReference>
<dbReference type="InterPro" id="IPR001202">
    <property type="entry name" value="WW_dom"/>
</dbReference>
<dbReference type="InterPro" id="IPR036020">
    <property type="entry name" value="WW_dom_sf"/>
</dbReference>
<dbReference type="InterPro" id="IPR042732">
    <property type="entry name" value="WWOX_SDR_c-like"/>
</dbReference>
<dbReference type="PANTHER" id="PTHR24320">
    <property type="entry name" value="RETINOL DEHYDROGENASE"/>
    <property type="match status" value="1"/>
</dbReference>
<dbReference type="PANTHER" id="PTHR24320:SF282">
    <property type="entry name" value="WW DOMAIN-CONTAINING OXIDOREDUCTASE"/>
    <property type="match status" value="1"/>
</dbReference>
<dbReference type="Pfam" id="PF00106">
    <property type="entry name" value="adh_short"/>
    <property type="match status" value="1"/>
</dbReference>
<dbReference type="Pfam" id="PF00397">
    <property type="entry name" value="WW"/>
    <property type="match status" value="2"/>
</dbReference>
<dbReference type="PRINTS" id="PR00081">
    <property type="entry name" value="GDHRDH"/>
</dbReference>
<dbReference type="SMART" id="SM00456">
    <property type="entry name" value="WW"/>
    <property type="match status" value="2"/>
</dbReference>
<dbReference type="SUPFAM" id="SSF51735">
    <property type="entry name" value="NAD(P)-binding Rossmann-fold domains"/>
    <property type="match status" value="1"/>
</dbReference>
<dbReference type="SUPFAM" id="SSF51045">
    <property type="entry name" value="WW domain"/>
    <property type="match status" value="2"/>
</dbReference>
<dbReference type="PROSITE" id="PS01159">
    <property type="entry name" value="WW_DOMAIN_1"/>
    <property type="match status" value="2"/>
</dbReference>
<dbReference type="PROSITE" id="PS50020">
    <property type="entry name" value="WW_DOMAIN_2"/>
    <property type="match status" value="2"/>
</dbReference>
<comment type="function">
    <text evidence="1 7 12 16 17 18 20 21">Putative oxidoreductase. Acts as a tumor suppressor and plays a role in apoptosis. Required for normal bone development (By similarity). May function synergistically with p53/TP53 to control genotoxic stress-induced cell death. Plays a role in TGFB1 signaling and TGFB1-mediated cell death. May also play a role in tumor necrosis factor (TNF)-mediated cell death. Inhibits Wnt signaling, probably by sequestering DVL2 in the cytoplasm.</text>
</comment>
<comment type="subunit">
    <text evidence="1 9 11 12 16 17 18 19 20 21 22 26">Interacts with TP53, p73/TP73 and MAPK8. Interacts with MAPT/TAU, RUNX2 and HYAL2 (By similarity). Forms a ternary complex with TP53 and MDM2. Interacts with ERBB4, LITAF and WBP1. Interacts with DVL1, DVL2 and DVL3. May interact with FAM189B and SCOTIN. Interacts with TNK2. Interacts with TMEM207. Interacts (via WW domain) with VOPP1 (PubMed:30285739).</text>
</comment>
<comment type="interaction">
    <interactant intactId="EBI-4320739">
        <id>Q9NZC7</id>
    </interactant>
    <interactant intactId="EBI-740850">
        <id>O14641</id>
        <label>DVL2</label>
    </interactant>
    <organismsDiffer>false</organismsDiffer>
    <experiments>2</experiments>
</comment>
<comment type="interaction">
    <interactant intactId="EBI-4320739">
        <id>Q9NZC7</id>
    </interactant>
    <interactant intactId="EBI-6366314">
        <id>P81408</id>
        <label>ENTREP3</label>
    </interactant>
    <organismsDiffer>false</organismsDiffer>
    <experiments>5</experiments>
</comment>
<comment type="interaction">
    <interactant intactId="EBI-4320739">
        <id>Q9NZC7</id>
    </interactant>
    <interactant intactId="EBI-725647">
        <id>Q99732</id>
        <label>LITAF</label>
    </interactant>
    <organismsDiffer>false</organismsDiffer>
    <experiments>5</experiments>
</comment>
<comment type="interaction">
    <interactant intactId="EBI-4320739">
        <id>Q9NZC7</id>
    </interactant>
    <interactant intactId="EBI-2115556">
        <id>Q8N114</id>
        <label>SHISA5</label>
    </interactant>
    <organismsDiffer>false</organismsDiffer>
    <experiments>2</experiments>
</comment>
<comment type="interaction">
    <interactant intactId="EBI-4320739">
        <id>Q9NZC7</id>
    </interactant>
    <interactant intactId="EBI-366083">
        <id>P04637</id>
        <label>TP53</label>
    </interactant>
    <organismsDiffer>false</organismsDiffer>
    <experiments>2</experiments>
</comment>
<comment type="interaction">
    <interactant intactId="EBI-4320739">
        <id>Q9NZC7</id>
    </interactant>
    <interactant intactId="EBI-389606">
        <id>O15350</id>
        <label>TP73</label>
    </interactant>
    <organismsDiffer>false</organismsDiffer>
    <experiments>4</experiments>
</comment>
<comment type="interaction">
    <interactant intactId="EBI-4320739">
        <id>Q9NZC7</id>
    </interactant>
    <interactant intactId="EBI-389619">
        <id>O15350-1</id>
        <label>TP73</label>
    </interactant>
    <organismsDiffer>false</organismsDiffer>
    <experiments>3</experiments>
</comment>
<comment type="interaction">
    <interactant intactId="EBI-4320739">
        <id>Q9NZC7</id>
    </interactant>
    <interactant intactId="EBI-389623">
        <id>O15350-2</id>
        <label>TP73</label>
    </interactant>
    <organismsDiffer>false</organismsDiffer>
    <experiments>5</experiments>
</comment>
<comment type="interaction">
    <interactant intactId="EBI-4320739">
        <id>Q9NZC7</id>
    </interactant>
    <interactant intactId="EBI-715058">
        <id>Q96AW1</id>
        <label>VOPP1</label>
    </interactant>
    <organismsDiffer>false</organismsDiffer>
    <experiments>7</experiments>
</comment>
<comment type="interaction">
    <interactant intactId="EBI-4320739">
        <id>Q9NZC7</id>
    </interactant>
    <interactant intactId="EBI-3867685">
        <id>Q96G27</id>
        <label>WBP1</label>
    </interactant>
    <organismsDiffer>false</organismsDiffer>
    <experiments>4</experiments>
</comment>
<comment type="interaction">
    <interactant intactId="EBI-4320739">
        <id>Q9NZC7</id>
    </interactant>
    <interactant intactId="EBI-5234367">
        <id>Q67FY2</id>
        <label>Bcl9l</label>
    </interactant>
    <organismsDiffer>true</organismsDiffer>
    <experiments>3</experiments>
</comment>
<comment type="interaction">
    <interactant intactId="EBI-4320739">
        <id>Q9NZC7</id>
    </interactant>
    <interactant intactId="EBI-641940">
        <id>Q60838</id>
        <label>Dvl2</label>
    </interactant>
    <organismsDiffer>true</organismsDiffer>
    <experiments>2</experiments>
</comment>
<comment type="interaction">
    <interactant intactId="EBI-4320739">
        <id>Q9NZC7</id>
    </interactant>
    <interactant intactId="EBI-4398741">
        <id>Q61527</id>
        <label>Erbb4</label>
    </interactant>
    <organismsDiffer>true</organismsDiffer>
    <experiments>3</experiments>
</comment>
<comment type="interaction">
    <interactant intactId="EBI-12040603">
        <id>Q9NZC7-5</id>
    </interactant>
    <interactant intactId="EBI-12318443">
        <id>Q8NFV4-4</id>
        <label>ABHD11</label>
    </interactant>
    <organismsDiffer>false</organismsDiffer>
    <experiments>3</experiments>
</comment>
<comment type="interaction">
    <interactant intactId="EBI-12040603">
        <id>Q9NZC7-5</id>
    </interactant>
    <interactant intactId="EBI-11096309">
        <id>Q9NYB9-2</id>
        <label>ABI2</label>
    </interactant>
    <organismsDiffer>false</organismsDiffer>
    <experiments>5</experiments>
</comment>
<comment type="interaction">
    <interactant intactId="EBI-12040603">
        <id>Q9NZC7-5</id>
    </interactant>
    <interactant intactId="EBI-1047273">
        <id>Q9BWD1</id>
        <label>ACAT2</label>
    </interactant>
    <organismsDiffer>false</organismsDiffer>
    <experiments>3</experiments>
</comment>
<comment type="interaction">
    <interactant intactId="EBI-12040603">
        <id>Q9NZC7-5</id>
    </interactant>
    <interactant intactId="EBI-11976299">
        <id>Q5BKX5-3</id>
        <label>ACTMAP</label>
    </interactant>
    <organismsDiffer>false</organismsDiffer>
    <experiments>3</experiments>
</comment>
<comment type="interaction">
    <interactant intactId="EBI-12040603">
        <id>Q9NZC7-5</id>
    </interactant>
    <interactant intactId="EBI-742064">
        <id>Q03154</id>
        <label>ACY1</label>
    </interactant>
    <organismsDiffer>false</organismsDiffer>
    <experiments>3</experiments>
</comment>
<comment type="interaction">
    <interactant intactId="EBI-12040603">
        <id>Q9NZC7-5</id>
    </interactant>
    <interactant intactId="EBI-12015266">
        <id>P18825</id>
        <label>ADRA2C</label>
    </interactant>
    <organismsDiffer>false</organismsDiffer>
    <experiments>3</experiments>
</comment>
<comment type="interaction">
    <interactant intactId="EBI-12040603">
        <id>Q9NZC7-5</id>
    </interactant>
    <interactant intactId="EBI-12224467">
        <id>Q9NYG5-2</id>
        <label>ANAPC11</label>
    </interactant>
    <organismsDiffer>false</organismsDiffer>
    <experiments>3</experiments>
</comment>
<comment type="interaction">
    <interactant intactId="EBI-12040603">
        <id>Q9NZC7-5</id>
    </interactant>
    <interactant intactId="EBI-715243">
        <id>P50995</id>
        <label>ANXA11</label>
    </interactant>
    <organismsDiffer>false</organismsDiffer>
    <experiments>3</experiments>
</comment>
<comment type="interaction">
    <interactant intactId="EBI-12040603">
        <id>Q9NZC7-5</id>
    </interactant>
    <interactant intactId="EBI-2875665">
        <id>Q96B67</id>
        <label>ARRDC3</label>
    </interactant>
    <organismsDiffer>false</organismsDiffer>
    <experiments>8</experiments>
</comment>
<comment type="interaction">
    <interactant intactId="EBI-12040603">
        <id>Q9NZC7-5</id>
    </interactant>
    <interactant intactId="EBI-11954292">
        <id>Q86V38</id>
        <label>ATN1</label>
    </interactant>
    <organismsDiffer>false</organismsDiffer>
    <experiments>3</experiments>
</comment>
<comment type="interaction">
    <interactant intactId="EBI-12040603">
        <id>Q9NZC7-5</id>
    </interactant>
    <interactant intactId="EBI-745689">
        <id>Q7L5A3</id>
        <label>ATOSB</label>
    </interactant>
    <organismsDiffer>false</organismsDiffer>
    <experiments>3</experiments>
</comment>
<comment type="interaction">
    <interactant intactId="EBI-12040603">
        <id>Q9NZC7-5</id>
    </interactant>
    <interactant intactId="EBI-12809220">
        <id>Q5SWW7</id>
        <label>C10orf55</label>
    </interactant>
    <organismsDiffer>false</organismsDiffer>
    <experiments>3</experiments>
</comment>
<comment type="interaction">
    <interactant intactId="EBI-12040603">
        <id>Q9NZC7-5</id>
    </interactant>
    <interactant intactId="EBI-6660291">
        <id>Q6NUJ2</id>
        <label>C11orf87</label>
    </interactant>
    <organismsDiffer>false</organismsDiffer>
    <experiments>3</experiments>
</comment>
<comment type="interaction">
    <interactant intactId="EBI-12040603">
        <id>Q9NZC7-5</id>
    </interactant>
    <interactant intactId="EBI-1104933">
        <id>Q8N4L8</id>
        <label>CCDC24</label>
    </interactant>
    <organismsDiffer>false</organismsDiffer>
    <experiments>3</experiments>
</comment>
<comment type="interaction">
    <interactant intactId="EBI-12040603">
        <id>Q9NZC7-5</id>
    </interactant>
    <interactant intactId="EBI-4314501">
        <id>P40199</id>
        <label>CEACAM6</label>
    </interactant>
    <organismsDiffer>false</organismsDiffer>
    <experiments>3</experiments>
</comment>
<comment type="interaction">
    <interactant intactId="EBI-12040603">
        <id>Q9NZC7-5</id>
    </interactant>
    <interactant intactId="EBI-741032">
        <id>Q8NE01</id>
        <label>CNNM3</label>
    </interactant>
    <organismsDiffer>false</organismsDiffer>
    <experiments>3</experiments>
</comment>
<comment type="interaction">
    <interactant intactId="EBI-12040603">
        <id>Q9NZC7-5</id>
    </interactant>
    <interactant intactId="EBI-11088043">
        <id>Q16630-2</id>
        <label>CPSF6</label>
    </interactant>
    <organismsDiffer>false</organismsDiffer>
    <experiments>3</experiments>
</comment>
<comment type="interaction">
    <interactant intactId="EBI-12040603">
        <id>Q9NZC7-5</id>
    </interactant>
    <interactant intactId="EBI-10192698">
        <id>Q02930-3</id>
        <label>CREB5</label>
    </interactant>
    <organismsDiffer>false</organismsDiffer>
    <experiments>3</experiments>
</comment>
<comment type="interaction">
    <interactant intactId="EBI-12040603">
        <id>Q9NZC7-5</id>
    </interactant>
    <interactant intactId="EBI-6875961">
        <id>P02489</id>
        <label>CRYAA</label>
    </interactant>
    <organismsDiffer>false</organismsDiffer>
    <experiments>3</experiments>
</comment>
<comment type="interaction">
    <interactant intactId="EBI-12040603">
        <id>Q9NZC7-5</id>
    </interactant>
    <interactant intactId="EBI-348169">
        <id>P67870</id>
        <label>CSNK2B</label>
    </interactant>
    <organismsDiffer>false</organismsDiffer>
    <experiments>3</experiments>
</comment>
<comment type="interaction">
    <interactant intactId="EBI-12040603">
        <id>Q9NZC7-5</id>
    </interactant>
    <interactant intactId="EBI-1188472">
        <id>P78358</id>
        <label>CTAG1B</label>
    </interactant>
    <organismsDiffer>false</organismsDiffer>
    <experiments>3</experiments>
</comment>
<comment type="interaction">
    <interactant intactId="EBI-12040603">
        <id>Q9NZC7-5</id>
    </interactant>
    <interactant intactId="EBI-751587">
        <id>Q9GZU7</id>
        <label>CTDSP1</label>
    </interactant>
    <organismsDiffer>false</organismsDiffer>
    <experiments>3</experiments>
</comment>
<comment type="interaction">
    <interactant intactId="EBI-12040603">
        <id>Q9NZC7-5</id>
    </interactant>
    <interactant intactId="EBI-724310">
        <id>Q15038</id>
        <label>DAZAP2</label>
    </interactant>
    <organismsDiffer>false</organismsDiffer>
    <experiments>6</experiments>
</comment>
<comment type="interaction">
    <interactant intactId="EBI-12040603">
        <id>Q9NZC7-5</id>
    </interactant>
    <interactant intactId="EBI-9679045">
        <id>Q9NQL9</id>
        <label>DMRT3</label>
    </interactant>
    <organismsDiffer>false</organismsDiffer>
    <experiments>3</experiments>
</comment>
<comment type="interaction">
    <interactant intactId="EBI-12040603">
        <id>Q9NZC7-5</id>
    </interactant>
    <interactant intactId="EBI-10976677">
        <id>G5E9A7</id>
        <label>DMWD</label>
    </interactant>
    <organismsDiffer>false</organismsDiffer>
    <experiments>3</experiments>
</comment>
<comment type="interaction">
    <interactant intactId="EBI-12040603">
        <id>Q9NZC7-5</id>
    </interactant>
    <interactant intactId="EBI-744099">
        <id>Q9H0I2</id>
        <label>ENKD1</label>
    </interactant>
    <organismsDiffer>false</organismsDiffer>
    <experiments>3</experiments>
</comment>
<comment type="interaction">
    <interactant intactId="EBI-12040603">
        <id>Q9NZC7-5</id>
    </interactant>
    <interactant intactId="EBI-2565863">
        <id>P00488</id>
        <label>F13A1</label>
    </interactant>
    <organismsDiffer>false</organismsDiffer>
    <experiments>3</experiments>
</comment>
<comment type="interaction">
    <interactant intactId="EBI-12040603">
        <id>Q9NZC7-5</id>
    </interactant>
    <interactant intactId="EBI-2807642">
        <id>Q8WU58</id>
        <label>FAM222B</label>
    </interactant>
    <organismsDiffer>false</organismsDiffer>
    <experiments>5</experiments>
</comment>
<comment type="interaction">
    <interactant intactId="EBI-12040603">
        <id>Q9NZC7-5</id>
    </interactant>
    <interactant intactId="EBI-2515349">
        <id>Q9BSK4</id>
        <label>FEM1A</label>
    </interactant>
    <organismsDiffer>false</organismsDiffer>
    <experiments>3</experiments>
</comment>
<comment type="interaction">
    <interactant intactId="EBI-12040603">
        <id>Q9NZC7-5</id>
    </interactant>
    <interactant intactId="EBI-11320806">
        <id>Q9NU39</id>
        <label>FOXD4L1</label>
    </interactant>
    <organismsDiffer>false</organismsDiffer>
    <experiments>3</experiments>
</comment>
<comment type="interaction">
    <interactant intactId="EBI-12040603">
        <id>Q9NZC7-5</id>
    </interactant>
    <interactant intactId="EBI-12018822">
        <id>Q12951-2</id>
        <label>FOXI1</label>
    </interactant>
    <organismsDiffer>false</organismsDiffer>
    <experiments>3</experiments>
</comment>
<comment type="interaction">
    <interactant intactId="EBI-12040603">
        <id>Q9NZC7-5</id>
    </interactant>
    <interactant intactId="EBI-725515">
        <id>O43559</id>
        <label>FRS3</label>
    </interactant>
    <organismsDiffer>false</organismsDiffer>
    <experiments>3</experiments>
</comment>
<comment type="interaction">
    <interactant intactId="EBI-12040603">
        <id>Q9NZC7-5</id>
    </interactant>
    <interactant intactId="EBI-10188645">
        <id>O75603</id>
        <label>GCM2</label>
    </interactant>
    <organismsDiffer>false</organismsDiffer>
    <experiments>3</experiments>
</comment>
<comment type="interaction">
    <interactant intactId="EBI-12040603">
        <id>Q9NZC7-5</id>
    </interactant>
    <interactant intactId="EBI-744104">
        <id>P55040</id>
        <label>GEM</label>
    </interactant>
    <organismsDiffer>false</organismsDiffer>
    <experiments>3</experiments>
</comment>
<comment type="interaction">
    <interactant intactId="EBI-12040603">
        <id>Q9NZC7-5</id>
    </interactant>
    <interactant intactId="EBI-744302">
        <id>P14136</id>
        <label>GFAP</label>
    </interactant>
    <organismsDiffer>false</organismsDiffer>
    <experiments>3</experiments>
</comment>
<comment type="interaction">
    <interactant intactId="EBI-12040603">
        <id>Q9NZC7-5</id>
    </interactant>
    <interactant intactId="EBI-7251368">
        <id>Q9BZE0</id>
        <label>GLIS2</label>
    </interactant>
    <organismsDiffer>false</organismsDiffer>
    <experiments>3</experiments>
</comment>
<comment type="interaction">
    <interactant intactId="EBI-12040603">
        <id>Q9NZC7-5</id>
    </interactant>
    <interactant intactId="EBI-11975289">
        <id>Q9Y223-2</id>
        <label>GNE</label>
    </interactant>
    <organismsDiffer>false</organismsDiffer>
    <experiments>3</experiments>
</comment>
<comment type="interaction">
    <interactant intactId="EBI-12040603">
        <id>Q9NZC7-5</id>
    </interactant>
    <interactant intactId="EBI-747754">
        <id>P28799</id>
        <label>GRN</label>
    </interactant>
    <organismsDiffer>false</organismsDiffer>
    <experiments>3</experiments>
</comment>
<comment type="interaction">
    <interactant intactId="EBI-12040603">
        <id>Q9NZC7-5</id>
    </interactant>
    <interactant intactId="EBI-740785">
        <id>P49639</id>
        <label>HOXA1</label>
    </interactant>
    <organismsDiffer>false</organismsDiffer>
    <experiments>3</experiments>
</comment>
<comment type="interaction">
    <interactant intactId="EBI-12040603">
        <id>Q9NZC7-5</id>
    </interactant>
    <interactant intactId="EBI-1752118">
        <id>P31273</id>
        <label>HOXC8</label>
    </interactant>
    <organismsDiffer>false</organismsDiffer>
    <experiments>3</experiments>
</comment>
<comment type="interaction">
    <interactant intactId="EBI-12040603">
        <id>Q9NZC7-5</id>
    </interactant>
    <interactant intactId="EBI-352682">
        <id>P04792</id>
        <label>HSPB1</label>
    </interactant>
    <organismsDiffer>false</organismsDiffer>
    <experiments>3</experiments>
</comment>
<comment type="interaction">
    <interactant intactId="EBI-12040603">
        <id>Q9NZC7-5</id>
    </interactant>
    <interactant intactId="EBI-739395">
        <id>Q16082</id>
        <label>HSPB2</label>
    </interactant>
    <organismsDiffer>false</organismsDiffer>
    <experiments>3</experiments>
</comment>
<comment type="interaction">
    <interactant intactId="EBI-12040603">
        <id>Q9NZC7-5</id>
    </interactant>
    <interactant intactId="EBI-746217">
        <id>Q8IZ03</id>
        <label>IFIT2</label>
    </interactant>
    <organismsDiffer>false</organismsDiffer>
    <experiments>3</experiments>
</comment>
<comment type="interaction">
    <interactant intactId="EBI-12040603">
        <id>Q9NZC7-5</id>
    </interactant>
    <interactant intactId="EBI-6509505">
        <id>Q0VD86</id>
        <label>INCA1</label>
    </interactant>
    <organismsDiffer>false</organismsDiffer>
    <experiments>3</experiments>
</comment>
<comment type="interaction">
    <interactant intactId="EBI-12040603">
        <id>Q9NZC7-5</id>
    </interactant>
    <interactant intactId="EBI-1055254">
        <id>Q8WXH2</id>
        <label>JPH3</label>
    </interactant>
    <organismsDiffer>false</organismsDiffer>
    <experiments>3</experiments>
</comment>
<comment type="interaction">
    <interactant intactId="EBI-12040603">
        <id>Q9NZC7-5</id>
    </interactant>
    <interactant intactId="EBI-399080">
        <id>Q92993</id>
        <label>KAT5</label>
    </interactant>
    <organismsDiffer>false</organismsDiffer>
    <experiments>3</experiments>
</comment>
<comment type="interaction">
    <interactant intactId="EBI-12040603">
        <id>Q9NZC7-5</id>
    </interactant>
    <interactant intactId="EBI-10975473">
        <id>O60333-2</id>
        <label>KIF1B</label>
    </interactant>
    <organismsDiffer>false</organismsDiffer>
    <experiments>3</experiments>
</comment>
<comment type="interaction">
    <interactant intactId="EBI-12040603">
        <id>Q9NZC7-5</id>
    </interactant>
    <interactant intactId="EBI-9478422">
        <id>Q96G42</id>
        <label>KLHDC7B</label>
    </interactant>
    <organismsDiffer>false</organismsDiffer>
    <experiments>3</experiments>
</comment>
<comment type="interaction">
    <interactant intactId="EBI-12040603">
        <id>Q9NZC7-5</id>
    </interactant>
    <interactant intactId="EBI-6426443">
        <id>Q2WGJ6</id>
        <label>KLHL38</label>
    </interactant>
    <organismsDiffer>false</organismsDiffer>
    <experiments>3</experiments>
</comment>
<comment type="interaction">
    <interactant intactId="EBI-12040603">
        <id>Q9NZC7-5</id>
    </interactant>
    <interactant intactId="EBI-2432309">
        <id>Q92876</id>
        <label>KLK6</label>
    </interactant>
    <organismsDiffer>false</organismsDiffer>
    <experiments>3</experiments>
</comment>
<comment type="interaction">
    <interactant intactId="EBI-12040603">
        <id>Q9NZC7-5</id>
    </interactant>
    <interactant intactId="EBI-2430095">
        <id>P12035</id>
        <label>KRT3</label>
    </interactant>
    <organismsDiffer>false</organismsDiffer>
    <experiments>3</experiments>
</comment>
<comment type="interaction">
    <interactant intactId="EBI-12040603">
        <id>Q9NZC7-5</id>
    </interactant>
    <interactant intactId="EBI-1047093">
        <id>O76011</id>
        <label>KRT34</label>
    </interactant>
    <organismsDiffer>false</organismsDiffer>
    <experiments>3</experiments>
</comment>
<comment type="interaction">
    <interactant intactId="EBI-12040603">
        <id>Q9NZC7-5</id>
    </interactant>
    <interactant intactId="EBI-2949715">
        <id>O95678</id>
        <label>KRT75</label>
    </interactant>
    <organismsDiffer>false</organismsDiffer>
    <experiments>3</experiments>
</comment>
<comment type="interaction">
    <interactant intactId="EBI-12040603">
        <id>Q9NZC7-5</id>
    </interactant>
    <interactant intactId="EBI-1052037">
        <id>Q8IUC1</id>
        <label>KRTAP11-1</label>
    </interactant>
    <organismsDiffer>false</organismsDiffer>
    <experiments>3</experiments>
</comment>
<comment type="interaction">
    <interactant intactId="EBI-12040603">
        <id>Q9NZC7-5</id>
    </interactant>
    <interactant intactId="EBI-9088686">
        <id>Q14847-2</id>
        <label>LASP1</label>
    </interactant>
    <organismsDiffer>false</organismsDiffer>
    <experiments>3</experiments>
</comment>
<comment type="interaction">
    <interactant intactId="EBI-12040603">
        <id>Q9NZC7-5</id>
    </interactant>
    <interactant intactId="EBI-725647">
        <id>Q99732</id>
        <label>LITAF</label>
    </interactant>
    <organismsDiffer>false</organismsDiffer>
    <experiments>3</experiments>
</comment>
<comment type="interaction">
    <interactant intactId="EBI-12040603">
        <id>Q9NZC7-5</id>
    </interactant>
    <interactant intactId="EBI-11742507">
        <id>Q8TAP4-4</id>
        <label>LMO3</label>
    </interactant>
    <organismsDiffer>false</organismsDiffer>
    <experiments>6</experiments>
</comment>
<comment type="interaction">
    <interactant intactId="EBI-12040603">
        <id>Q9NZC7-5</id>
    </interactant>
    <interactant intactId="EBI-394558">
        <id>Q71SY5</id>
        <label>MED25</label>
    </interactant>
    <organismsDiffer>false</organismsDiffer>
    <experiments>3</experiments>
</comment>
<comment type="interaction">
    <interactant intactId="EBI-12040603">
        <id>Q9NZC7-5</id>
    </interactant>
    <interactant intactId="EBI-2340269">
        <id>Q13064</id>
        <label>MKRN3</label>
    </interactant>
    <organismsDiffer>false</organismsDiffer>
    <experiments>3</experiments>
</comment>
<comment type="interaction">
    <interactant intactId="EBI-12040603">
        <id>Q9NZC7-5</id>
    </interactant>
    <interactant intactId="EBI-709754">
        <id>Q9HB07</id>
        <label>MYG1</label>
    </interactant>
    <organismsDiffer>false</organismsDiffer>
    <experiments>3</experiments>
</comment>
<comment type="interaction">
    <interactant intactId="EBI-12040603">
        <id>Q9NZC7-5</id>
    </interactant>
    <interactant intactId="EBI-744402">
        <id>Q9NP98</id>
        <label>MYOZ1</label>
    </interactant>
    <organismsDiffer>false</organismsDiffer>
    <experiments>3</experiments>
</comment>
<comment type="interaction">
    <interactant intactId="EBI-12040603">
        <id>Q9NZC7-5</id>
    </interactant>
    <interactant intactId="EBI-746712">
        <id>Q9NPC6</id>
        <label>MYOZ2</label>
    </interactant>
    <organismsDiffer>false</organismsDiffer>
    <experiments>3</experiments>
</comment>
<comment type="interaction">
    <interactant intactId="EBI-12040603">
        <id>Q9NZC7-5</id>
    </interactant>
    <interactant intactId="EBI-713665">
        <id>P19404</id>
        <label>NDUFV2</label>
    </interactant>
    <organismsDiffer>false</organismsDiffer>
    <experiments>3</experiments>
</comment>
<comment type="interaction">
    <interactant intactId="EBI-12040603">
        <id>Q9NZC7-5</id>
    </interactant>
    <interactant intactId="EBI-11746523">
        <id>Q14511-2</id>
        <label>NEDD9</label>
    </interactant>
    <organismsDiffer>false</organismsDiffer>
    <experiments>3</experiments>
</comment>
<comment type="interaction">
    <interactant intactId="EBI-12040603">
        <id>Q9NZC7-5</id>
    </interactant>
    <interactant intactId="EBI-1391623">
        <id>P29474</id>
        <label>NOS3</label>
    </interactant>
    <organismsDiffer>false</organismsDiffer>
    <experiments>3</experiments>
</comment>
<comment type="interaction">
    <interactant intactId="EBI-12040603">
        <id>Q9NZC7-5</id>
    </interactant>
    <interactant intactId="EBI-10225049">
        <id>Q7RTU3</id>
        <label>OLIG3</label>
    </interactant>
    <organismsDiffer>false</organismsDiffer>
    <experiments>3</experiments>
</comment>
<comment type="interaction">
    <interactant intactId="EBI-12040603">
        <id>Q9NZC7-5</id>
    </interactant>
    <interactant intactId="EBI-740446">
        <id>P32242</id>
        <label>OTX1</label>
    </interactant>
    <organismsDiffer>false</organismsDiffer>
    <experiments>3</experiments>
</comment>
<comment type="interaction">
    <interactant intactId="EBI-12040603">
        <id>Q9NZC7-5</id>
    </interactant>
    <interactant intactId="EBI-2562092">
        <id>Q86TB9</id>
        <label>PATL1</label>
    </interactant>
    <organismsDiffer>false</organismsDiffer>
    <experiments>5</experiments>
</comment>
<comment type="interaction">
    <interactant intactId="EBI-12040603">
        <id>Q9NZC7-5</id>
    </interactant>
    <interactant intactId="EBI-11022007">
        <id>Q9HBE1-4</id>
        <label>PATZ1</label>
    </interactant>
    <organismsDiffer>false</organismsDiffer>
    <experiments>5</experiments>
</comment>
<comment type="interaction">
    <interactant intactId="EBI-12040603">
        <id>Q9NZC7-5</id>
    </interactant>
    <interactant intactId="EBI-12111000">
        <id>P55771</id>
        <label>PAX9</label>
    </interactant>
    <organismsDiffer>false</organismsDiffer>
    <experiments>3</experiments>
</comment>
<comment type="interaction">
    <interactant intactId="EBI-12040603">
        <id>Q9NZC7-5</id>
    </interactant>
    <interactant intactId="EBI-10302990">
        <id>Q9BYU1</id>
        <label>PBX4</label>
    </interactant>
    <organismsDiffer>false</organismsDiffer>
    <experiments>3</experiments>
</comment>
<comment type="interaction">
    <interactant intactId="EBI-12040603">
        <id>Q9NZC7-5</id>
    </interactant>
    <interactant intactId="EBI-724639">
        <id>Q9UBV8</id>
        <label>PEF1</label>
    </interactant>
    <organismsDiffer>false</organismsDiffer>
    <experiments>3</experiments>
</comment>
<comment type="interaction">
    <interactant intactId="EBI-12040603">
        <id>Q9NZC7-5</id>
    </interactant>
    <interactant intactId="EBI-12138495">
        <id>Q99697-2</id>
        <label>PITX2</label>
    </interactant>
    <organismsDiffer>false</organismsDiffer>
    <experiments>3</experiments>
</comment>
<comment type="interaction">
    <interactant intactId="EBI-12040603">
        <id>Q9NZC7-5</id>
    </interactant>
    <interactant intactId="EBI-12014286">
        <id>Q494U1-3</id>
        <label>PLEKHN1</label>
    </interactant>
    <organismsDiffer>false</organismsDiffer>
    <experiments>3</experiments>
</comment>
<comment type="interaction">
    <interactant intactId="EBI-12040603">
        <id>Q9NZC7-5</id>
    </interactant>
    <interactant intactId="EBI-750734">
        <id>Q9NRY6</id>
        <label>PLSCR3</label>
    </interactant>
    <organismsDiffer>false</organismsDiffer>
    <experiments>3</experiments>
</comment>
<comment type="interaction">
    <interactant intactId="EBI-12040603">
        <id>Q9NZC7-5</id>
    </interactant>
    <interactant intactId="EBI-25884072">
        <id>P62937-2</id>
        <label>PPIA</label>
    </interactant>
    <organismsDiffer>false</organismsDiffer>
    <experiments>3</experiments>
</comment>
<comment type="interaction">
    <interactant intactId="EBI-12040603">
        <id>Q9NZC7-5</id>
    </interactant>
    <interactant intactId="EBI-359252">
        <id>P23284</id>
        <label>PPIB</label>
    </interactant>
    <organismsDiffer>false</organismsDiffer>
    <experiments>3</experiments>
</comment>
<comment type="interaction">
    <interactant intactId="EBI-12040603">
        <id>Q9NZC7-5</id>
    </interactant>
    <interactant intactId="EBI-1383528">
        <id>P17252</id>
        <label>PRKCA</label>
    </interactant>
    <organismsDiffer>false</organismsDiffer>
    <experiments>3</experiments>
</comment>
<comment type="interaction">
    <interactant intactId="EBI-12040603">
        <id>Q9NZC7-5</id>
    </interactant>
    <interactant intactId="EBI-749195">
        <id>P60891</id>
        <label>PRPS1</label>
    </interactant>
    <organismsDiffer>false</organismsDiffer>
    <experiments>3</experiments>
</comment>
<comment type="interaction">
    <interactant intactId="EBI-12040603">
        <id>Q9NZC7-5</id>
    </interactant>
    <interactant intactId="EBI-372312">
        <id>P28062-2</id>
        <label>PSMB8</label>
    </interactant>
    <organismsDiffer>false</organismsDiffer>
    <experiments>3</experiments>
</comment>
<comment type="interaction">
    <interactant intactId="EBI-12040603">
        <id>Q9NZC7-5</id>
    </interactant>
    <interactant intactId="EBI-744023">
        <id>Q9BTL3</id>
        <label>RAMAC</label>
    </interactant>
    <organismsDiffer>false</organismsDiffer>
    <experiments>3</experiments>
</comment>
<comment type="interaction">
    <interactant intactId="EBI-12040603">
        <id>Q9NZC7-5</id>
    </interactant>
    <interactant intactId="EBI-396669">
        <id>Q9Y3C5</id>
        <label>RNF11</label>
    </interactant>
    <organismsDiffer>false</organismsDiffer>
    <experiments>3</experiments>
</comment>
<comment type="interaction">
    <interactant intactId="EBI-12040603">
        <id>Q9NZC7-5</id>
    </interactant>
    <interactant intactId="EBI-6257312">
        <id>Q9BVN2</id>
        <label>RUSC1</label>
    </interactant>
    <organismsDiffer>false</organismsDiffer>
    <experiments>3</experiments>
</comment>
<comment type="interaction">
    <interactant intactId="EBI-12040603">
        <id>Q9NZC7-5</id>
    </interactant>
    <interactant intactId="EBI-3957636">
        <id>Q8IYX7</id>
        <label>SAXO1</label>
    </interactant>
    <organismsDiffer>false</organismsDiffer>
    <experiments>3</experiments>
</comment>
<comment type="interaction">
    <interactant intactId="EBI-12040603">
        <id>Q9NZC7-5</id>
    </interactant>
    <interactant intactId="EBI-12000762">
        <id>Q7Z5V6-2</id>
        <label>SAXO4</label>
    </interactant>
    <organismsDiffer>false</organismsDiffer>
    <experiments>3</experiments>
</comment>
<comment type="interaction">
    <interactant intactId="EBI-12040603">
        <id>Q9NZC7-5</id>
    </interactant>
    <interactant intactId="EBI-9090795">
        <id>Q15047-2</id>
        <label>SETDB1</label>
    </interactant>
    <organismsDiffer>false</organismsDiffer>
    <experiments>3</experiments>
</comment>
<comment type="interaction">
    <interactant intactId="EBI-12040603">
        <id>Q9NZC7-5</id>
    </interactant>
    <interactant intactId="EBI-747035">
        <id>Q9H788</id>
        <label>SH2D4A</label>
    </interactant>
    <organismsDiffer>false</organismsDiffer>
    <experiments>5</experiments>
</comment>
<comment type="interaction">
    <interactant intactId="EBI-12040603">
        <id>Q9NZC7-5</id>
    </interactant>
    <interactant intactId="EBI-79084">
        <id>Q92529</id>
        <label>SHC3</label>
    </interactant>
    <organismsDiffer>false</organismsDiffer>
    <experiments>5</experiments>
</comment>
<comment type="interaction">
    <interactant intactId="EBI-12040603">
        <id>Q9NZC7-5</id>
    </interactant>
    <interactant intactId="EBI-12806032">
        <id>Q16348</id>
        <label>SLC15A2</label>
    </interactant>
    <organismsDiffer>false</organismsDiffer>
    <experiments>3</experiments>
</comment>
<comment type="interaction">
    <interactant intactId="EBI-12040603">
        <id>Q9NZC7-5</id>
    </interactant>
    <interactant intactId="EBI-12067698">
        <id>Q99954</id>
        <label>SMR3A</label>
    </interactant>
    <organismsDiffer>false</organismsDiffer>
    <experiments>3</experiments>
</comment>
<comment type="interaction">
    <interactant intactId="EBI-12040603">
        <id>Q9NZC7-5</id>
    </interactant>
    <interactant intactId="EBI-766589">
        <id>P09234</id>
        <label>SNRPC</label>
    </interactant>
    <organismsDiffer>false</organismsDiffer>
    <experiments>3</experiments>
</comment>
<comment type="interaction">
    <interactant intactId="EBI-12040603">
        <id>Q9NZC7-5</id>
    </interactant>
    <interactant intactId="EBI-743976">
        <id>Q96LM6</id>
        <label>SPMIP9</label>
    </interactant>
    <organismsDiffer>false</organismsDiffer>
    <experiments>3</experiments>
</comment>
<comment type="interaction">
    <interactant intactId="EBI-12040603">
        <id>Q9NZC7-5</id>
    </interactant>
    <interactant intactId="EBI-5235340">
        <id>Q7Z699</id>
        <label>SPRED1</label>
    </interactant>
    <organismsDiffer>false</organismsDiffer>
    <experiments>3</experiments>
</comment>
<comment type="interaction">
    <interactant intactId="EBI-12040603">
        <id>Q9NZC7-5</id>
    </interactant>
    <interactant intactId="EBI-740781">
        <id>Q9BT92</id>
        <label>TCHP</label>
    </interactant>
    <organismsDiffer>false</organismsDiffer>
    <experiments>3</experiments>
</comment>
<comment type="interaction">
    <interactant intactId="EBI-12040603">
        <id>Q9NZC7-5</id>
    </interactant>
    <interactant intactId="EBI-8644516">
        <id>Q9BXF9</id>
        <label>TEKT3</label>
    </interactant>
    <organismsDiffer>false</organismsDiffer>
    <experiments>3</experiments>
</comment>
<comment type="interaction">
    <interactant intactId="EBI-12040603">
        <id>Q9NZC7-5</id>
    </interactant>
    <interactant intactId="EBI-357061">
        <id>Q92734</id>
        <label>TFG</label>
    </interactant>
    <organismsDiffer>false</organismsDiffer>
    <experiments>3</experiments>
</comment>
<comment type="interaction">
    <interactant intactId="EBI-12040603">
        <id>Q9NZC7-5</id>
    </interactant>
    <interactant intactId="EBI-11525489">
        <id>Q86WT6-2</id>
        <label>TRIM69</label>
    </interactant>
    <organismsDiffer>false</organismsDiffer>
    <experiments>3</experiments>
</comment>
<comment type="interaction">
    <interactant intactId="EBI-12040603">
        <id>Q9NZC7-5</id>
    </interactant>
    <interactant intactId="EBI-10241197">
        <id>Q3SY00</id>
        <label>TSGA10IP</label>
    </interactant>
    <organismsDiffer>false</organismsDiffer>
    <experiments>5</experiments>
</comment>
<comment type="interaction">
    <interactant intactId="EBI-12040603">
        <id>Q9NZC7-5</id>
    </interactant>
    <interactant intactId="EBI-12068150">
        <id>Q6NVU6</id>
        <label>UFSP1</label>
    </interactant>
    <organismsDiffer>false</organismsDiffer>
    <experiments>3</experiments>
</comment>
<comment type="interaction">
    <interactant intactId="EBI-12040603">
        <id>Q9NZC7-5</id>
    </interactant>
    <interactant intactId="EBI-10191303">
        <id>O95231</id>
        <label>VENTX</label>
    </interactant>
    <organismsDiffer>false</organismsDiffer>
    <experiments>5</experiments>
</comment>
<comment type="interaction">
    <interactant intactId="EBI-12040603">
        <id>Q9NZC7-5</id>
    </interactant>
    <interactant intactId="EBI-11980193">
        <id>Q14119</id>
        <label>VEZF1</label>
    </interactant>
    <organismsDiffer>false</organismsDiffer>
    <experiments>3</experiments>
</comment>
<comment type="interaction">
    <interactant intactId="EBI-12040603">
        <id>Q9NZC7-5</id>
    </interactant>
    <interactant intactId="EBI-2559305">
        <id>A5D8V6</id>
        <label>VPS37C</label>
    </interactant>
    <organismsDiffer>false</organismsDiffer>
    <experiments>3</experiments>
</comment>
<comment type="interaction">
    <interactant intactId="EBI-12040603">
        <id>Q9NZC7-5</id>
    </interactant>
    <interactant intactId="EBI-720609">
        <id>O76024</id>
        <label>WFS1</label>
    </interactant>
    <organismsDiffer>false</organismsDiffer>
    <experiments>3</experiments>
</comment>
<comment type="interaction">
    <interactant intactId="EBI-12040603">
        <id>Q9NZC7-5</id>
    </interactant>
    <interactant intactId="EBI-12040603">
        <id>Q9NZC7-5</id>
        <label>WWOX</label>
    </interactant>
    <organismsDiffer>false</organismsDiffer>
    <experiments>3</experiments>
</comment>
<comment type="interaction">
    <interactant intactId="EBI-12040603">
        <id>Q9NZC7-5</id>
    </interactant>
    <interactant intactId="EBI-359832">
        <id>P61981</id>
        <label>YWHAG</label>
    </interactant>
    <organismsDiffer>false</organismsDiffer>
    <experiments>3</experiments>
</comment>
<comment type="interaction">
    <interactant intactId="EBI-12040603">
        <id>Q9NZC7-5</id>
    </interactant>
    <interactant intactId="EBI-10188476">
        <id>A0A0C4DGF1</id>
        <label>ZBTB32</label>
    </interactant>
    <organismsDiffer>false</organismsDiffer>
    <experiments>6</experiments>
</comment>
<comment type="interaction">
    <interactant intactId="EBI-12040603">
        <id>Q9NZC7-5</id>
    </interactant>
    <interactant intactId="EBI-11963196">
        <id>Q15915</id>
        <label>ZIC1</label>
    </interactant>
    <organismsDiffer>false</organismsDiffer>
    <experiments>3</experiments>
</comment>
<comment type="interaction">
    <interactant intactId="EBI-12040603">
        <id>Q9NZC7-5</id>
    </interactant>
    <interactant intactId="EBI-7101455">
        <id>P52742</id>
        <label>ZNF135</label>
    </interactant>
    <organismsDiffer>false</organismsDiffer>
    <experiments>3</experiments>
</comment>
<comment type="interaction">
    <interactant intactId="EBI-12040603">
        <id>Q9NZC7-5</id>
    </interactant>
    <interactant intactId="EBI-744257">
        <id>Q96IQ9</id>
        <label>ZNF414</label>
    </interactant>
    <organismsDiffer>false</organismsDiffer>
    <experiments>3</experiments>
</comment>
<comment type="interaction">
    <interactant intactId="EBI-12040603">
        <id>Q9NZC7-5</id>
    </interactant>
    <interactant intactId="EBI-745520">
        <id>Q9P0T4</id>
        <label>ZNF581</label>
    </interactant>
    <organismsDiffer>false</organismsDiffer>
    <experiments>3</experiments>
</comment>
<comment type="interaction">
    <interactant intactId="EBI-12040603">
        <id>Q9NZC7-5</id>
    </interactant>
    <interactant intactId="EBI-750454">
        <id>Q96EJ4</id>
    </interactant>
    <organismsDiffer>false</organismsDiffer>
    <experiments>3</experiments>
</comment>
<comment type="subcellular location">
    <subcellularLocation>
        <location evidence="10 12 18 20 21">Cytoplasm</location>
    </subcellularLocation>
    <subcellularLocation>
        <location evidence="10 11 18 20">Nucleus</location>
    </subcellularLocation>
    <subcellularLocation>
        <location evidence="10">Mitochondrion</location>
    </subcellularLocation>
    <subcellularLocation>
        <location evidence="26">Golgi apparatus</location>
    </subcellularLocation>
    <subcellularLocation>
        <location evidence="26">Lysosome</location>
    </subcellularLocation>
    <text evidence="1 10 20 26">Partially localizes to the mitochondria (PubMed:14695174). Translocates to the nucleus upon genotoxic stress or TNF stimulation (By similarity). Translocates to the nucleus in response to TGFB1 (PubMed:19366691). Isoform 5 and isoform 6 may localize in the nucleus. Localized to the lysosome probably upon binding to VOPP1 (PubMed:30285739).</text>
</comment>
<comment type="alternative products">
    <event type="alternative splicing"/>
    <isoform>
        <id>Q9NZC7-1</id>
        <name>1</name>
        <name>FOR II</name>
        <name>FOR2</name>
        <name>WWOXv1</name>
        <name>WWOX v8</name>
        <sequence type="displayed"/>
    </isoform>
    <isoform>
        <id>Q9NZC7-2</id>
        <name>2</name>
        <name>FOR I</name>
        <name>FOR1</name>
        <name>WOX2</name>
        <name>WWOXv2</name>
        <sequence type="described" ref="VSP_016367 VSP_016369"/>
    </isoform>
    <isoform>
        <id>Q9NZC7-3</id>
        <name>3</name>
        <name>FOR III</name>
        <name>FOR3</name>
        <name>WOX3</name>
        <sequence type="described" ref="VSP_016364 VSP_016365"/>
    </isoform>
    <isoform>
        <id>Q9NZC7-4</id>
        <name>4</name>
        <name>FOR IV</name>
        <sequence type="described" ref="VSP_016358 VSP_016359"/>
    </isoform>
    <isoform>
        <id>Q9NZC7-5</id>
        <name>5</name>
        <name>WWOXdelta6-8</name>
        <name>WWOXv4</name>
        <sequence type="described" ref="VSP_016363"/>
    </isoform>
    <isoform>
        <id>Q9NZC7-6</id>
        <name>6</name>
        <name>WWOXdelta5-8</name>
        <name>WWOXv3</name>
        <sequence type="described" ref="VSP_016360"/>
    </isoform>
    <isoform>
        <id>Q9NZC7-7</id>
        <name>7</name>
        <sequence type="described" ref="VSP_016362 VSP_016366"/>
    </isoform>
</comment>
<comment type="tissue specificity">
    <text evidence="4 7">Widely expressed. Strongly expressed in testis, prostate, and ovary. Overexpressed in cancer cell lines. Isoform 5 and isoform 6 may only be expressed in tumor cell lines.</text>
</comment>
<comment type="domain">
    <text evidence="11 12 16">The WW 1 domain mediates interaction with TP53, and probably TP73, TFAP2C, LITAF and WBP1.</text>
</comment>
<comment type="PTM">
    <text evidence="12 19 20">Phosphorylated upon genotoxic stress. Phosphorylation of Tyr-33 regulates interaction with TP53, TP73 and MAPK8. May also regulate proapoptotic activity. Phosphorylation by TNK2 is associated with polyubiquitination and degradation.</text>
</comment>
<comment type="PTM">
    <text evidence="19">Ubiquitinated when phosphorylated by TNK2, leading to its degradation.</text>
</comment>
<comment type="disease">
    <text evidence="5 6 13 14 15">Defects in WWOX may be involved in several cancer types. The gene spans the second most common chromosomal fragile site (FRA16D) which is frequently altered in cancers (PubMed:10861292). Alteration of the expression and expression of some isoforms is associated with cancers. However, it is still unclear if alteration of WWOX is directly implicated in cancerogenesis or if it corresponds to a secondary effect (PubMed:10861292, PubMed:11572989, PubMed:15073125, PubMed:15131042, PubMed:15266310).</text>
</comment>
<comment type="disease" evidence="8">
    <disease id="DI-01537">
        <name>Esophageal cancer</name>
        <acronym>ESCR</acronym>
        <description>A malignancy of the esophagus. The most common types are esophageal squamous cell carcinoma and adenocarcinoma. Cancer of the esophagus remains a devastating disease because it is usually not detected until it has progressed to an advanced incurable stage.</description>
        <dbReference type="MIM" id="133239"/>
    </disease>
    <text>The disease may be caused by variants affecting the gene represented in this entry.</text>
</comment>
<comment type="disease" evidence="23 24">
    <disease id="DI-04025">
        <name>Spinocerebellar ataxia, autosomal recessive, 12</name>
        <acronym>SCAR12</acronym>
        <description>A form of spinocerebellar ataxia, a clinically and genetically heterogeneous group of cerebellar disorders. Patients show progressive incoordination of gait and often poor coordination of hands, speech and eye movements, due to degeneration of the cerebellum with variable involvement of the brainstem and spinal cord. SCAR12 is additionally characterized by onset of generalized seizures in infancy, and delayed psychomotor development with intellectual disability. Some patients may also show spasticity.</description>
        <dbReference type="MIM" id="614322"/>
    </disease>
    <text>The disease is caused by variants affecting the gene represented in this entry.</text>
</comment>
<comment type="disease" evidence="25">
    <disease id="DI-04325">
        <name>Developmental and epileptic encephalopathy 28</name>
        <acronym>DEE28</acronym>
        <description>A form of epileptic encephalopathy, a heterogeneous group of severe early-onset epilepsies characterized by refractory seizures, neurodevelopmental impairment, and poor prognosis. Development is normal prior to seizure onset, after which cognitive and motor delays become apparent.</description>
        <dbReference type="MIM" id="616211"/>
    </disease>
    <text>The disease is caused by variants affecting the gene represented in this entry.</text>
</comment>
<comment type="similarity">
    <text evidence="32">Belongs to the short-chain dehydrogenases/reductases (SDR) family.</text>
</comment>
<comment type="sequence caution" evidence="32">
    <conflict type="frameshift">
        <sequence resource="EMBL-CDS" id="AAP94227"/>
    </conflict>
</comment>
<comment type="online information" name="Atlas of Genetics and Cytogenetics in Oncology and Haematology">
    <link uri="https://atlasgeneticsoncology.org/gene/508/WWOX"/>
</comment>
<reference key="1">
    <citation type="journal article" date="2000" name="Cancer Res.">
        <title>WWOX, a novel WW domain-containing protein mapping to human chromosome 16q23.3-24.1, a region frequently affected in breast cancer.</title>
        <authorList>
            <person name="Bednarek A.K."/>
            <person name="Laflin K.J."/>
            <person name="Daniel R.L."/>
            <person name="Liao Q."/>
            <person name="Hawkins K.A."/>
            <person name="Aldaz C.M."/>
        </authorList>
    </citation>
    <scope>NUCLEOTIDE SEQUENCE [MRNA] (ISOFORM 1)</scope>
    <scope>NUCLEOTIDE SEQUENCE [GENOMIC DNA] OF 1-35</scope>
    <scope>TISSUE SPECIFICITY</scope>
    <source>
        <tissue>Placenta</tissue>
    </source>
</reference>
<reference key="2">
    <citation type="journal article" date="2000" name="Hum. Mol. Genet.">
        <title>Common chromosomal fragile site FRA16D sequence: identification of the FOR gene spanning FRA16D and homozygous deletions and translocation breakpoints in cancer cells.</title>
        <authorList>
            <person name="Ried K."/>
            <person name="Finnis M."/>
            <person name="Hobson L."/>
            <person name="Mangelsdorf M."/>
            <person name="Dayan S."/>
            <person name="Nancarrow J.K."/>
            <person name="Woollatt E."/>
            <person name="Kremmidiotis G."/>
            <person name="Gardner A."/>
            <person name="Venter D."/>
            <person name="Baker E."/>
            <person name="Richards R.I."/>
        </authorList>
    </citation>
    <scope>NUCLEOTIDE SEQUENCE [MRNA] (ISOFORMS 1; 2; 3 AND 4)</scope>
    <scope>NUCLEOTIDE SEQUENCE [GENOMIC DNA] OF 173-414</scope>
    <scope>CHROMOSOMAL REARRANGEMENT</scope>
</reference>
<reference key="3">
    <citation type="journal article" date="2001" name="Cancer Res.">
        <title>WWOX, the FRA16D gene, behaves as a suppressor of tumor growth.</title>
        <authorList>
            <person name="Bednarek A.K."/>
            <person name="Keck-Waggoner C.L."/>
            <person name="Daniel R.L."/>
            <person name="Laflin K.J."/>
            <person name="Bergsagel P.L."/>
            <person name="Kiguchi K."/>
            <person name="Brenner A.J."/>
            <person name="Aldaz C.M."/>
        </authorList>
    </citation>
    <scope>NUCLEOTIDE SEQUENCE [MRNA] (ISOFORMS 5 AND 6)</scope>
    <scope>FUNCTION</scope>
    <scope>TISSUE SPECIFICITY</scope>
</reference>
<reference key="4">
    <citation type="journal article" date="2001" name="Proc. Natl. Acad. Sci. U.S.A.">
        <title>WWOX: a candidate tumor suppressor gene involved in multiple tumor types.</title>
        <authorList>
            <person name="Paige A.J.W."/>
            <person name="Taylor K.J."/>
            <person name="Taylor C."/>
            <person name="Hillier S.G."/>
            <person name="Farrington S."/>
            <person name="Scott D."/>
            <person name="Porteous D.J."/>
            <person name="Smyth J.F."/>
            <person name="Gabra H."/>
            <person name="Watson J.E.V."/>
        </authorList>
    </citation>
    <scope>NUCLEOTIDE SEQUENCE [GENOMIC DNA]</scope>
    <scope>ALTERNATIVE SPLICING (ISOFORMS 1; 3 AND 7)</scope>
    <scope>VARIANTS LEU-98; SER-111; TRP-120; THR-179; PHE-272; ALA-282 AND HIS-314</scope>
    <scope>INVOLVEMENT IN CANCERS</scope>
</reference>
<reference key="5">
    <citation type="submission" date="2004-12" db="EMBL/GenBank/DDBJ databases">
        <title>Cloning of human WOX8 (WWOX v8).</title>
        <authorList>
            <person name="Chang N.-S."/>
        </authorList>
    </citation>
    <scope>NUCLEOTIDE SEQUENCE [MRNA] (ISOFORM 1)</scope>
    <scope>VARIANT THR-179</scope>
    <source>
        <tissue>Colon adenocarcinoma</tissue>
    </source>
</reference>
<reference key="6">
    <citation type="journal article" date="2004" name="Nat. Genet.">
        <title>Complete sequencing and characterization of 21,243 full-length human cDNAs.</title>
        <authorList>
            <person name="Ota T."/>
            <person name="Suzuki Y."/>
            <person name="Nishikawa T."/>
            <person name="Otsuki T."/>
            <person name="Sugiyama T."/>
            <person name="Irie R."/>
            <person name="Wakamatsu A."/>
            <person name="Hayashi K."/>
            <person name="Sato H."/>
            <person name="Nagai K."/>
            <person name="Kimura K."/>
            <person name="Makita H."/>
            <person name="Sekine M."/>
            <person name="Obayashi M."/>
            <person name="Nishi T."/>
            <person name="Shibahara T."/>
            <person name="Tanaka T."/>
            <person name="Ishii S."/>
            <person name="Yamamoto J."/>
            <person name="Saito K."/>
            <person name="Kawai Y."/>
            <person name="Isono Y."/>
            <person name="Nakamura Y."/>
            <person name="Nagahari K."/>
            <person name="Murakami K."/>
            <person name="Yasuda T."/>
            <person name="Iwayanagi T."/>
            <person name="Wagatsuma M."/>
            <person name="Shiratori A."/>
            <person name="Sudo H."/>
            <person name="Hosoiri T."/>
            <person name="Kaku Y."/>
            <person name="Kodaira H."/>
            <person name="Kondo H."/>
            <person name="Sugawara M."/>
            <person name="Takahashi M."/>
            <person name="Kanda K."/>
            <person name="Yokoi T."/>
            <person name="Furuya T."/>
            <person name="Kikkawa E."/>
            <person name="Omura Y."/>
            <person name="Abe K."/>
            <person name="Kamihara K."/>
            <person name="Katsuta N."/>
            <person name="Sato K."/>
            <person name="Tanikawa M."/>
            <person name="Yamazaki M."/>
            <person name="Ninomiya K."/>
            <person name="Ishibashi T."/>
            <person name="Yamashita H."/>
            <person name="Murakawa K."/>
            <person name="Fujimori K."/>
            <person name="Tanai H."/>
            <person name="Kimata M."/>
            <person name="Watanabe M."/>
            <person name="Hiraoka S."/>
            <person name="Chiba Y."/>
            <person name="Ishida S."/>
            <person name="Ono Y."/>
            <person name="Takiguchi S."/>
            <person name="Watanabe S."/>
            <person name="Yosida M."/>
            <person name="Hotuta T."/>
            <person name="Kusano J."/>
            <person name="Kanehori K."/>
            <person name="Takahashi-Fujii A."/>
            <person name="Hara H."/>
            <person name="Tanase T.-O."/>
            <person name="Nomura Y."/>
            <person name="Togiya S."/>
            <person name="Komai F."/>
            <person name="Hara R."/>
            <person name="Takeuchi K."/>
            <person name="Arita M."/>
            <person name="Imose N."/>
            <person name="Musashino K."/>
            <person name="Yuuki H."/>
            <person name="Oshima A."/>
            <person name="Sasaki N."/>
            <person name="Aotsuka S."/>
            <person name="Yoshikawa Y."/>
            <person name="Matsunawa H."/>
            <person name="Ichihara T."/>
            <person name="Shiohata N."/>
            <person name="Sano S."/>
            <person name="Moriya S."/>
            <person name="Momiyama H."/>
            <person name="Satoh N."/>
            <person name="Takami S."/>
            <person name="Terashima Y."/>
            <person name="Suzuki O."/>
            <person name="Nakagawa S."/>
            <person name="Senoh A."/>
            <person name="Mizoguchi H."/>
            <person name="Goto Y."/>
            <person name="Shimizu F."/>
            <person name="Wakebe H."/>
            <person name="Hishigaki H."/>
            <person name="Watanabe T."/>
            <person name="Sugiyama A."/>
            <person name="Takemoto M."/>
            <person name="Kawakami B."/>
            <person name="Yamazaki M."/>
            <person name="Watanabe K."/>
            <person name="Kumagai A."/>
            <person name="Itakura S."/>
            <person name="Fukuzumi Y."/>
            <person name="Fujimori Y."/>
            <person name="Komiyama M."/>
            <person name="Tashiro H."/>
            <person name="Tanigami A."/>
            <person name="Fujiwara T."/>
            <person name="Ono T."/>
            <person name="Yamada K."/>
            <person name="Fujii Y."/>
            <person name="Ozaki K."/>
            <person name="Hirao M."/>
            <person name="Ohmori Y."/>
            <person name="Kawabata A."/>
            <person name="Hikiji T."/>
            <person name="Kobatake N."/>
            <person name="Inagaki H."/>
            <person name="Ikema Y."/>
            <person name="Okamoto S."/>
            <person name="Okitani R."/>
            <person name="Kawakami T."/>
            <person name="Noguchi S."/>
            <person name="Itoh T."/>
            <person name="Shigeta K."/>
            <person name="Senba T."/>
            <person name="Matsumura K."/>
            <person name="Nakajima Y."/>
            <person name="Mizuno T."/>
            <person name="Morinaga M."/>
            <person name="Sasaki M."/>
            <person name="Togashi T."/>
            <person name="Oyama M."/>
            <person name="Hata H."/>
            <person name="Watanabe M."/>
            <person name="Komatsu T."/>
            <person name="Mizushima-Sugano J."/>
            <person name="Satoh T."/>
            <person name="Shirai Y."/>
            <person name="Takahashi Y."/>
            <person name="Nakagawa K."/>
            <person name="Okumura K."/>
            <person name="Nagase T."/>
            <person name="Nomura N."/>
            <person name="Kikuchi H."/>
            <person name="Masuho Y."/>
            <person name="Yamashita R."/>
            <person name="Nakai K."/>
            <person name="Yada T."/>
            <person name="Nakamura Y."/>
            <person name="Ohara O."/>
            <person name="Isogai T."/>
            <person name="Sugano S."/>
        </authorList>
    </citation>
    <scope>NUCLEOTIDE SEQUENCE [LARGE SCALE MRNA] (ISOFORM 1)</scope>
</reference>
<reference key="7">
    <citation type="submission" date="2003-05" db="EMBL/GenBank/DDBJ databases">
        <title>Cloning of human full-length CDSs in BD Creator(TM) system donor vector.</title>
        <authorList>
            <person name="Kalnine N."/>
            <person name="Chen X."/>
            <person name="Rolfs A."/>
            <person name="Halleck A."/>
            <person name="Hines L."/>
            <person name="Eisenstein S."/>
            <person name="Koundinya M."/>
            <person name="Raphael J."/>
            <person name="Moreira D."/>
            <person name="Kelley T."/>
            <person name="LaBaer J."/>
            <person name="Lin Y."/>
            <person name="Phelan M."/>
            <person name="Farmer A."/>
        </authorList>
    </citation>
    <scope>NUCLEOTIDE SEQUENCE [LARGE SCALE MRNA] (ISOFORM 5)</scope>
</reference>
<reference key="8">
    <citation type="journal article" date="2004" name="Genome Res.">
        <title>The status, quality, and expansion of the NIH full-length cDNA project: the Mammalian Gene Collection (MGC).</title>
        <authorList>
            <consortium name="The MGC Project Team"/>
        </authorList>
    </citation>
    <scope>NUCLEOTIDE SEQUENCE [LARGE SCALE MRNA] (ISOFORM 5)</scope>
    <source>
        <tissue>Lung</tissue>
    </source>
</reference>
<reference key="9">
    <citation type="journal article" date="2003" name="Cancer Res.">
        <title>An opposing view on WWOX protein function as a tumor suppressor.</title>
        <authorList>
            <person name="Watanabe A."/>
            <person name="Hippo Y."/>
            <person name="Taniguchi H."/>
            <person name="Iwanari H."/>
            <person name="Yashiro M."/>
            <person name="Hirakawa K."/>
            <person name="Kodama T."/>
            <person name="Aburatani H."/>
        </authorList>
    </citation>
    <scope>SUBCELLULAR LOCATION</scope>
</reference>
<reference key="10">
    <citation type="journal article" date="2003" name="J. Biol. Chem.">
        <title>JNK1 physically interacts with WW domain-containing oxidoreductase (WOX1) and inhibits WOX1-mediated apoptosis.</title>
        <authorList>
            <person name="Chang N.-S."/>
            <person name="Doherty J."/>
            <person name="Ensign A."/>
        </authorList>
    </citation>
    <scope>INTERACTION WITH MAPK8 AND TP53</scope>
    <scope>MUTAGENESIS OF LYS-28; ASP-29 AND TYR-33</scope>
</reference>
<reference key="11">
    <citation type="journal article" date="2004" name="Br. J. Cancer">
        <title>Frequent downregulation and loss of WWOX gene expression in human hepatocellular carcinoma.</title>
        <authorList>
            <person name="Park S.-W."/>
            <person name="Ludes-Meyers J."/>
            <person name="Zimonjic D.B."/>
            <person name="Durkin M.E."/>
            <person name="Popescu N.C."/>
            <person name="Aldaz C.M."/>
        </authorList>
    </citation>
    <scope>INVOLVEMENT IN CANCERS</scope>
</reference>
<reference key="12">
    <citation type="journal article" date="2004" name="Cancer Res.">
        <title>Physical and functional interactions between the Wwox tumor suppressor protein and the AP-2gamma transcription factor.</title>
        <authorList>
            <person name="Aqeilan R.I."/>
            <person name="Palamarchuk A."/>
            <person name="Weigel R.J."/>
            <person name="Herrero J.J."/>
            <person name="Pekarsky Y."/>
            <person name="Croce C.M."/>
        </authorList>
    </citation>
    <scope>FUNCTION</scope>
    <scope>INTERACTION WITH TFAP2C AND TFAP2A</scope>
    <scope>DOMAIN</scope>
</reference>
<reference key="13">
    <citation type="journal article" date="2004" name="Clin. Cancer Res.">
        <title>The tumor suppressor gene WWOX at FRA16D is involved in pancreatic carcinogenesis.</title>
        <authorList>
            <person name="Kuroki T."/>
            <person name="Yendamuri S."/>
            <person name="Trapasso F."/>
            <person name="Matsuyama A."/>
            <person name="Aqeilan R.I."/>
            <person name="Alder H."/>
            <person name="Rattan S."/>
            <person name="Cesari R."/>
            <person name="Nolli M.L."/>
            <person name="Williams N.N."/>
            <person name="Mori M."/>
            <person name="Kanematsu T."/>
            <person name="Croce C.M."/>
        </authorList>
    </citation>
    <scope>INVOLVEMENT IN CANCERS</scope>
</reference>
<reference key="14">
    <citation type="journal article" date="2004" name="Clin. Cancer Res.">
        <title>Loss of WWOX expression in gastric carcinoma.</title>
        <authorList>
            <person name="Aqeilan R.I."/>
            <person name="Kuroki T."/>
            <person name="Pekarsky Y."/>
            <person name="Albagha O."/>
            <person name="Trapasso F."/>
            <person name="Baffa R."/>
            <person name="Huebner K."/>
            <person name="Edmonds P."/>
            <person name="Croce C.M."/>
        </authorList>
    </citation>
    <scope>INVOLVEMENT IN CANCERS</scope>
</reference>
<reference key="15">
    <citation type="journal article" date="2004" name="Oncogene">
        <title>WWOX binds the specific proline-rich ligand PPXY: identification of candidate interacting proteins.</title>
        <authorList>
            <person name="Ludes-Meyers J.H."/>
            <person name="Kil H."/>
            <person name="Bednarek A.K."/>
            <person name="Drake J."/>
            <person name="Bedford M.T."/>
            <person name="Aldaz C.M."/>
        </authorList>
    </citation>
    <scope>INTERACTION WITH LITAF; WBP1; FAM189B AND SCOTIN</scope>
    <scope>MUTAGENESIS OF 44-TRP--PRO-47 AND 85-TYR--PRO-88</scope>
    <scope>DOMAIN</scope>
    <scope>SUBCELLULAR LOCATION</scope>
</reference>
<reference key="16">
    <citation type="journal article" date="2004" name="Proc. Natl. Acad. Sci. U.S.A.">
        <title>Functional association between Wwox tumor suppressor protein and p73, a p53 homolog.</title>
        <authorList>
            <person name="Aqeilan R.I."/>
            <person name="Pekarsky Y."/>
            <person name="Herrero J.J."/>
            <person name="Palamarchuk A."/>
            <person name="Letofsky J."/>
            <person name="Druck T."/>
            <person name="Trapasso F."/>
            <person name="Han S.-Y."/>
            <person name="Melino G."/>
            <person name="Huebner K."/>
            <person name="Croce C.M."/>
        </authorList>
    </citation>
    <scope>FUNCTION</scope>
    <scope>INTERACTION WITH TP73</scope>
    <scope>DOMAIN</scope>
    <scope>MUTAGENESIS OF TYR-33 AND TYR-61</scope>
    <scope>PHOSPHORYLATION AT TYR-33</scope>
    <scope>SUBCELLULAR LOCATION</scope>
</reference>
<reference key="17">
    <citation type="journal article" date="2005" name="Cancer Res.">
        <title>WW domain-containing proteins, WWOX and YAP, compete for interaction with ErbB-4 and modulate its transcriptional function.</title>
        <authorList>
            <person name="Aqeilan R.I."/>
            <person name="Donati V."/>
            <person name="Palamarchuk A."/>
            <person name="Trapasso F."/>
            <person name="Kaou M."/>
            <person name="Pekarsky Y."/>
            <person name="Sudol M."/>
            <person name="Croce C.M."/>
        </authorList>
    </citation>
    <scope>FUNCTION</scope>
    <scope>INTERACTION WITH ERBB4</scope>
</reference>
<reference key="18">
    <citation type="journal article" date="2005" name="Cancer Res.">
        <title>Activated tyrosine kinase Ack1 promotes prostate tumorigenesis: role of Ack1 in polyubiquitination of tumor suppressor Wwox.</title>
        <authorList>
            <person name="Mahajan N.P."/>
            <person name="Whang Y.E."/>
            <person name="Mohler J.L."/>
            <person name="Earp H.S."/>
        </authorList>
    </citation>
    <scope>PHOSPHORYLATION AT TYR-287 BY TNK2</scope>
    <scope>UBIQUITINATION</scope>
    <scope>MUTAGENESIS OF TYR-287</scope>
    <scope>INTERACTION WITH TNK2</scope>
</reference>
<reference key="19">
    <citation type="journal article" date="2005" name="J. Biol. Chem.">
        <title>WOX1 is essential for tumor necrosis factor-, UV light-, staurosporine-, and p53-mediated cell death, and its tyrosine 33-phosphorylated form binds and stabilizes serine 46-phosphorylated p53.</title>
        <authorList>
            <person name="Chang N.-S."/>
            <person name="Doherty J."/>
            <person name="Ensign A."/>
            <person name="Schultz L."/>
            <person name="Hsu L.-J."/>
            <person name="Hong Q."/>
        </authorList>
    </citation>
    <scope>FUNCTION</scope>
    <scope>INTERACTION WITH MDM2 AND TP53</scope>
    <scope>PHOSPHORYLATION</scope>
    <scope>SUBCELLULAR LOCATION</scope>
</reference>
<reference key="20">
    <citation type="journal article" date="2005" name="Proc. Natl. Acad. Sci. U.S.A.">
        <title>WWOX gene restoration prevents lung cancer growth in vitro and in vivo.</title>
        <authorList>
            <person name="Fabbri M."/>
            <person name="Iliopoulos D."/>
            <person name="Trapasso F."/>
            <person name="Aqeilan R.I."/>
            <person name="Cimmino A."/>
            <person name="Zanesi N."/>
            <person name="Yendamuri S."/>
            <person name="Han S.-Y."/>
            <person name="Amadori D."/>
            <person name="Huebner K."/>
            <person name="Croce C.M."/>
        </authorList>
    </citation>
    <scope>DISEASE</scope>
</reference>
<reference key="21">
    <citation type="journal article" date="2009" name="J. Biol. Chem.">
        <title>Transforming growth factor beta1 signaling via interaction with cell surface Hyal-2 and recruitment of WWOX/WOX1.</title>
        <authorList>
            <person name="Hsu L.-J."/>
            <person name="Schultz L."/>
            <person name="Hong Q."/>
            <person name="Van Moer K."/>
            <person name="Heath J."/>
            <person name="Li M.-Y."/>
            <person name="Lai F.-J."/>
            <person name="Lin S.-R."/>
            <person name="Lee M.-H."/>
            <person name="Lo C.-P."/>
            <person name="Lin Y.-S."/>
            <person name="Chen S.-T."/>
            <person name="Chang N.-S."/>
        </authorList>
    </citation>
    <scope>FUNCTION</scope>
    <scope>PHOSPHORYLATION AT TYR-33</scope>
    <scope>SUBCELLULAR LOCATION</scope>
    <scope>INTERACTION WITH HYAL2</scope>
</reference>
<reference key="22">
    <citation type="journal article" date="2009" name="Oncogene">
        <title>Inhibition of the Wnt/beta-catenin pathway by the WWOX tumor suppressor protein.</title>
        <authorList>
            <person name="Bouteille N."/>
            <person name="Driouch K."/>
            <person name="Hage P.E."/>
            <person name="Sin S."/>
            <person name="Formstecher E."/>
            <person name="Camonis J."/>
            <person name="Lidereau R."/>
            <person name="Lallemand F."/>
        </authorList>
    </citation>
    <scope>FUNCTION</scope>
    <scope>SUBCELLULAR LOCATION</scope>
    <scope>INTERACTION WITH DVL1; DVL2 AND DVL3</scope>
</reference>
<reference key="23">
    <citation type="journal article" date="2009" name="Sci. Signal.">
        <title>Quantitative phosphoproteomic analysis of T cell receptor signaling reveals system-wide modulation of protein-protein interactions.</title>
        <authorList>
            <person name="Mayya V."/>
            <person name="Lundgren D.H."/>
            <person name="Hwang S.-I."/>
            <person name="Rezaul K."/>
            <person name="Wu L."/>
            <person name="Eng J.K."/>
            <person name="Rodionov V."/>
            <person name="Han D.K."/>
        </authorList>
    </citation>
    <scope>PHOSPHORYLATION [LARGE SCALE ANALYSIS] AT THR-12 AND SER-14</scope>
    <scope>IDENTIFICATION BY MASS SPECTROMETRY [LARGE SCALE ANALYSIS]</scope>
    <source>
        <tissue>Leukemic T-cell</tissue>
    </source>
</reference>
<reference key="24">
    <citation type="journal article" date="2012" name="Carcinogenesis">
        <title>A WWOX-binding molecule, transmembrane protein 207, is related to the invasiveness of gastric signet-ring cell carcinoma.</title>
        <authorList>
            <person name="Takeuchi T."/>
            <person name="Adachi Y."/>
            <person name="Nagayama T."/>
        </authorList>
    </citation>
    <scope>INTERACTION WITH TMEM207</scope>
</reference>
<reference key="25">
    <citation type="journal article" date="2014" name="J. Proteomics">
        <title>An enzyme assisted RP-RPLC approach for in-depth analysis of human liver phosphoproteome.</title>
        <authorList>
            <person name="Bian Y."/>
            <person name="Song C."/>
            <person name="Cheng K."/>
            <person name="Dong M."/>
            <person name="Wang F."/>
            <person name="Huang J."/>
            <person name="Sun D."/>
            <person name="Wang L."/>
            <person name="Ye M."/>
            <person name="Zou H."/>
        </authorList>
    </citation>
    <scope>IDENTIFICATION BY MASS SPECTROMETRY [LARGE SCALE ANALYSIS]</scope>
    <source>
        <tissue>Liver</tissue>
    </source>
</reference>
<reference key="26">
    <citation type="journal article" date="2018" name="BMC Biol.">
        <title>VOPP1 promotes breast tumorigenesis by interacting with the tumor suppressor WWOX.</title>
        <authorList>
            <person name="Bonin F."/>
            <person name="Taouis K."/>
            <person name="Azorin P."/>
            <person name="Petitalot A."/>
            <person name="Tariq Z."/>
            <person name="Nola S."/>
            <person name="Bouteille N."/>
            <person name="Tury S."/>
            <person name="Vacher S."/>
            <person name="Bieche I."/>
            <person name="Rais K.A."/>
            <person name="Pierron G."/>
            <person name="Fuhrmann L."/>
            <person name="Vincent-Salomon A."/>
            <person name="Formstecher E."/>
            <person name="Camonis J."/>
            <person name="Lidereau R."/>
            <person name="Lallemand F."/>
            <person name="Driouch K."/>
        </authorList>
    </citation>
    <scope>SUBCELLULAR LOCATION</scope>
    <scope>INTERACTION WITH VOPP1</scope>
    <scope>MUTAGENESIS OF TYR-33</scope>
</reference>
<reference key="27">
    <citation type="journal article" date="2014" name="Orphanet J. Rare Dis.">
        <title>The supposed tumor suppressor gene WWOX is mutated in an early lethal microcephaly syndrome with epilepsy, growth retardation and retinal degeneration.</title>
        <authorList>
            <person name="Abdel-Salam G."/>
            <person name="Thoenes M."/>
            <person name="Afifi H.H."/>
            <person name="Koerber F."/>
            <person name="Swan D."/>
            <person name="Bolz H.J."/>
        </authorList>
    </citation>
    <scope>INVOLVEMENT IN SCAR12</scope>
</reference>
<reference key="28">
    <citation type="journal article" date="2015" name="J. Med. Genet.">
        <title>WWOX-related encephalopathies: delineation of the phenotypical spectrum and emerging genotype-phenotype correlation.</title>
        <authorList>
            <person name="Mignot C."/>
            <person name="Lambert L."/>
            <person name="Pasquier L."/>
            <person name="Bienvenu T."/>
            <person name="Delahaye-Duriez A."/>
            <person name="Keren B."/>
            <person name="Lefranc J."/>
            <person name="Saunier A."/>
            <person name="Allou L."/>
            <person name="Roth V."/>
            <person name="Valduga M."/>
            <person name="Moustaine A."/>
            <person name="Auvin S."/>
            <person name="Barrey C."/>
            <person name="Chantot-Bastaraud S."/>
            <person name="Lebrun N."/>
            <person name="Moutard M.L."/>
            <person name="Nougues M.C."/>
            <person name="Vermersch A.I."/>
            <person name="Heron B."/>
            <person name="Pipiras E."/>
            <person name="Heron D."/>
            <person name="Olivier-Faivre L."/>
            <person name="Gueant J.L."/>
            <person name="Jonveaux P."/>
            <person name="Philippe C."/>
        </authorList>
    </citation>
    <scope>INVOLVEMENT IN DEE28</scope>
    <scope>VARIANT DEE28 ARG-47</scope>
</reference>
<reference key="29">
    <citation type="submission" date="2009-02" db="PDB data bank">
        <title>Solution structure of the second WW domain of WWOX.</title>
        <authorList>
            <person name="Kowalski K."/>
            <person name="Merkel A.L."/>
            <person name="Colella A."/>
            <person name="Richards R.I."/>
            <person name="Booker G.W."/>
        </authorList>
    </citation>
    <scope>STRUCTURE BY NMR OF 51-101</scope>
</reference>
<reference key="30">
    <citation type="journal article" date="2002" name="Cancer Res.">
        <title>Genetic alterations of the tumor suppressor gene WWOX in esophageal squamous cell carcinoma.</title>
        <authorList>
            <person name="Kuroki T."/>
            <person name="Trapasso F."/>
            <person name="Shiraishi T."/>
            <person name="Alder H."/>
            <person name="Mimori K."/>
            <person name="Mori M."/>
            <person name="Croce C.M."/>
        </authorList>
    </citation>
    <scope>VARIANT PRO-291</scope>
    <scope>INVOLVEMENT IN ESCR</scope>
</reference>
<reference key="31">
    <citation type="journal article" date="2014" name="Brain">
        <title>The tumour suppressor gene WWOX is mutated in autosomal recessive cerebellar ataxia with epilepsy and mental retardation.</title>
        <authorList>
            <person name="Mallaret M."/>
            <person name="Synofzik M."/>
            <person name="Lee J."/>
            <person name="Sagum C.A."/>
            <person name="Mahajnah M."/>
            <person name="Sharkia R."/>
            <person name="Drouot N."/>
            <person name="Renaud M."/>
            <person name="Klein F.A."/>
            <person name="Anheim M."/>
            <person name="Tranchant C."/>
            <person name="Mignot C."/>
            <person name="Mandel J.L."/>
            <person name="Bedford M."/>
            <person name="Bauer P."/>
            <person name="Salih M.A."/>
            <person name="Schuele R."/>
            <person name="Schoels L."/>
            <person name="Aldaz C.M."/>
            <person name="Koenig M."/>
        </authorList>
    </citation>
    <scope>VARIANTS SCAR12 THR-47 AND ARG-372</scope>
</reference>
<keyword id="KW-0002">3D-structure</keyword>
<keyword id="KW-0025">Alternative splicing</keyword>
<keyword id="KW-0053">Apoptosis</keyword>
<keyword id="KW-0963">Cytoplasm</keyword>
<keyword id="KW-0225">Disease variant</keyword>
<keyword id="KW-0887">Epilepsy</keyword>
<keyword id="KW-0333">Golgi apparatus</keyword>
<keyword id="KW-0458">Lysosome</keyword>
<keyword id="KW-0496">Mitochondrion</keyword>
<keyword id="KW-0521">NADP</keyword>
<keyword id="KW-0523">Neurodegeneration</keyword>
<keyword id="KW-0539">Nucleus</keyword>
<keyword id="KW-0560">Oxidoreductase</keyword>
<keyword id="KW-0597">Phosphoprotein</keyword>
<keyword id="KW-1267">Proteomics identification</keyword>
<keyword id="KW-1185">Reference proteome</keyword>
<keyword id="KW-0677">Repeat</keyword>
<keyword id="KW-0043">Tumor suppressor</keyword>
<keyword id="KW-0832">Ubl conjugation</keyword>
<keyword id="KW-0879">Wnt signaling pathway</keyword>
<evidence type="ECO:0000250" key="1"/>
<evidence type="ECO:0000255" key="2">
    <source>
        <dbReference type="PROSITE-ProRule" id="PRU00224"/>
    </source>
</evidence>
<evidence type="ECO:0000256" key="3">
    <source>
        <dbReference type="SAM" id="MobiDB-lite"/>
    </source>
</evidence>
<evidence type="ECO:0000269" key="4">
    <source>
    </source>
</evidence>
<evidence type="ECO:0000269" key="5">
    <source>
    </source>
</evidence>
<evidence type="ECO:0000269" key="6">
    <source>
    </source>
</evidence>
<evidence type="ECO:0000269" key="7">
    <source>
    </source>
</evidence>
<evidence type="ECO:0000269" key="8">
    <source>
    </source>
</evidence>
<evidence type="ECO:0000269" key="9">
    <source>
    </source>
</evidence>
<evidence type="ECO:0000269" key="10">
    <source>
    </source>
</evidence>
<evidence type="ECO:0000269" key="11">
    <source>
    </source>
</evidence>
<evidence type="ECO:0000269" key="12">
    <source>
    </source>
</evidence>
<evidence type="ECO:0000269" key="13">
    <source>
    </source>
</evidence>
<evidence type="ECO:0000269" key="14">
    <source>
    </source>
</evidence>
<evidence type="ECO:0000269" key="15">
    <source>
    </source>
</evidence>
<evidence type="ECO:0000269" key="16">
    <source>
    </source>
</evidence>
<evidence type="ECO:0000269" key="17">
    <source>
    </source>
</evidence>
<evidence type="ECO:0000269" key="18">
    <source>
    </source>
</evidence>
<evidence type="ECO:0000269" key="19">
    <source>
    </source>
</evidence>
<evidence type="ECO:0000269" key="20">
    <source>
    </source>
</evidence>
<evidence type="ECO:0000269" key="21">
    <source>
    </source>
</evidence>
<evidence type="ECO:0000269" key="22">
    <source>
    </source>
</evidence>
<evidence type="ECO:0000269" key="23">
    <source>
    </source>
</evidence>
<evidence type="ECO:0000269" key="24">
    <source>
    </source>
</evidence>
<evidence type="ECO:0000269" key="25">
    <source>
    </source>
</evidence>
<evidence type="ECO:0000269" key="26">
    <source>
    </source>
</evidence>
<evidence type="ECO:0000269" key="27">
    <source ref="5"/>
</evidence>
<evidence type="ECO:0000303" key="28">
    <source>
    </source>
</evidence>
<evidence type="ECO:0000303" key="29">
    <source>
    </source>
</evidence>
<evidence type="ECO:0000303" key="30">
    <source>
    </source>
</evidence>
<evidence type="ECO:0000303" key="31">
    <source ref="7"/>
</evidence>
<evidence type="ECO:0000305" key="32"/>
<evidence type="ECO:0007744" key="33">
    <source>
    </source>
</evidence>
<evidence type="ECO:0007829" key="34">
    <source>
        <dbReference type="PDB" id="1WMV"/>
    </source>
</evidence>
<feature type="chain" id="PRO_0000054815" description="WW domain-containing oxidoreductase">
    <location>
        <begin position="1"/>
        <end position="414"/>
    </location>
</feature>
<feature type="domain" description="WW 1" evidence="2">
    <location>
        <begin position="16"/>
        <end position="49"/>
    </location>
</feature>
<feature type="domain" description="WW 2" evidence="2">
    <location>
        <begin position="57"/>
        <end position="90"/>
    </location>
</feature>
<feature type="region of interest" description="Disordered" evidence="3">
    <location>
        <begin position="1"/>
        <end position="23"/>
    </location>
</feature>
<feature type="region of interest" description="Interaction with MAPT" evidence="1">
    <location>
        <begin position="125"/>
        <end position="414"/>
    </location>
</feature>
<feature type="region of interest" description="Mediates targeting to the mitochondria" evidence="1">
    <location>
        <begin position="209"/>
        <end position="273"/>
    </location>
</feature>
<feature type="short sequence motif" description="Nuclear localization signal" evidence="1">
    <location>
        <begin position="50"/>
        <end position="55"/>
    </location>
</feature>
<feature type="active site" description="Proton acceptor" evidence="1">
    <location>
        <position position="293"/>
    </location>
</feature>
<feature type="binding site" evidence="1">
    <location>
        <begin position="131"/>
        <end position="137"/>
    </location>
    <ligand>
        <name>NADP(+)</name>
        <dbReference type="ChEBI" id="CHEBI:58349"/>
    </ligand>
</feature>
<feature type="binding site" evidence="1">
    <location>
        <position position="260"/>
    </location>
    <ligand>
        <name>substrate</name>
    </ligand>
</feature>
<feature type="modified residue" description="Phosphothreonine" evidence="33">
    <location>
        <position position="12"/>
    </location>
</feature>
<feature type="modified residue" description="Phosphoserine" evidence="33">
    <location>
        <position position="14"/>
    </location>
</feature>
<feature type="modified residue" description="Phosphotyrosine" evidence="12 20">
    <location>
        <position position="33"/>
    </location>
</feature>
<feature type="modified residue" description="Phosphotyrosine; by TNK2" evidence="19">
    <location>
        <position position="287"/>
    </location>
</feature>
<feature type="splice variant" id="VSP_016358" description="In isoform 4." evidence="28">
    <original>N</original>
    <variation>K</variation>
    <location>
        <position position="36"/>
    </location>
</feature>
<feature type="splice variant" id="VSP_016359" description="In isoform 4." evidence="28">
    <location>
        <begin position="37"/>
        <end position="414"/>
    </location>
</feature>
<feature type="splice variant" id="VSP_016360" description="In isoform 6." evidence="29">
    <original>GFETAKSFALHGAHVILACRNMARASEAVSRILEEWHKAKVEAMTLDLALLRSVQHFAEAFKAKNVPLHVLVCNAATFALPWSLTKDGLETTFQVNHLGHFYLVQLLQDVLCRSAPARVIVVSSESHRFTDINDSLGKLDFSRLSPTKNDYWAMLAYNRSKLCNILFSNELHRRLSPRGVTSNAVHPGNMMYSNIHRSWWVYTLLFTLARPFTKSMQQGAATTVYCAAVPELEGLGGMYFNNCCRCMPSPEAQSEETARTLWALSERLIQERLGSQSG</original>
    <variation>ATGSCHHRVLCCCPRTGGSGRDVLQQLLPLHALTRSSERRDGPDPVGAQREADPRTAWQPVRLSGAQSGWAHTPALCVSPHASARAGPLPNVPPTQIRKSKGNKSSHNRVKNLKYQWEAGNSWGKVSLFWGWARHRSLCFLVVACLKVKTCLVCRFRISLEKHQQFSFFYCYRIA</variation>
    <location>
        <begin position="137"/>
        <end position="414"/>
    </location>
</feature>
<feature type="splice variant" id="VSP_016362" description="In isoform 7." evidence="32">
    <original>FETAKSFALHGAHVILACRNMARASEAVSRILEEWHKAKVEAMTLDLALLRSVQHFAEAFKAKNVPLHVLVCNAAT</original>
    <variation>KASCHVGRTLKHTRVEELSLLPTAINRELPPPCTVLLSQNWRVWEGCTSTTAAAACPHQKLRAKRRPGPCGRSARG</variation>
    <location>
        <begin position="138"/>
        <end position="213"/>
    </location>
</feature>
<feature type="splice variant" id="VSP_016363" description="In isoform 5." evidence="29 30 31">
    <location>
        <begin position="173"/>
        <end position="352"/>
    </location>
</feature>
<feature type="splice variant" id="VSP_016364" description="In isoform 3." evidence="28">
    <original>HKAKVEAMTLDLALLRS</original>
    <variation>KTKYHPPPEKCRIKIFH</variation>
    <location>
        <begin position="173"/>
        <end position="189"/>
    </location>
</feature>
<feature type="splice variant" id="VSP_016365" description="In isoform 3." evidence="28">
    <location>
        <begin position="190"/>
        <end position="414"/>
    </location>
</feature>
<feature type="splice variant" id="VSP_016366" description="In isoform 7." evidence="32">
    <location>
        <begin position="214"/>
        <end position="414"/>
    </location>
</feature>
<feature type="splice variant" id="VSP_016367" description="In isoform 2." evidence="28">
    <original>QQGAATTVYCA</original>
    <variation>VSDCLVEGGHF</variation>
    <location>
        <begin position="353"/>
        <end position="363"/>
    </location>
</feature>
<feature type="splice variant" id="VSP_016369" description="In isoform 2." evidence="28">
    <location>
        <begin position="364"/>
        <end position="414"/>
    </location>
</feature>
<feature type="sequence variant" id="VAR_072351" description="In DEE28; dbSNP:rs730880292." evidence="25">
    <original>P</original>
    <variation>R</variation>
    <location>
        <position position="47"/>
    </location>
</feature>
<feature type="sequence variant" id="VAR_070992" description="In SCAR12; dbSNP:rs587777128." evidence="23">
    <original>P</original>
    <variation>T</variation>
    <location>
        <position position="47"/>
    </location>
</feature>
<feature type="sequence variant" id="VAR_023916" description="In dbSNP:rs144601717." evidence="6">
    <original>P</original>
    <variation>L</variation>
    <location>
        <position position="98"/>
    </location>
</feature>
<feature type="sequence variant" id="VAR_023917" description="In a Burkitt lymphoma cell line; dbSNP:rs114755364." evidence="6">
    <original>T</original>
    <variation>S</variation>
    <location>
        <position position="111"/>
    </location>
</feature>
<feature type="sequence variant" id="VAR_023918" description="In a primary colorectal tumor and a histiocytic lymphoma cell line; dbSNP:rs141361080." evidence="6">
    <original>R</original>
    <variation>W</variation>
    <location>
        <position position="120"/>
    </location>
</feature>
<feature type="sequence variant" id="VAR_023919" description="In dbSNP:rs11545029." evidence="6 27">
    <original>A</original>
    <variation>T</variation>
    <location>
        <position position="179"/>
    </location>
</feature>
<feature type="sequence variant" id="VAR_052323" description="In dbSNP:rs7201683.">
    <original>L</original>
    <variation>V</variation>
    <location>
        <position position="216"/>
    </location>
</feature>
<feature type="sequence variant" id="VAR_023920" description="In dbSNP:rs186745328." evidence="6">
    <original>L</original>
    <variation>F</variation>
    <location>
        <position position="272"/>
    </location>
</feature>
<feature type="sequence variant" id="VAR_023921" description="In dbSNP:rs3764340." evidence="6">
    <original>P</original>
    <variation>A</variation>
    <location>
        <position position="282"/>
    </location>
</feature>
<feature type="sequence variant" id="VAR_023922" description="Found in a esophageal cancer sample; somatic mutation; dbSNP:rs119487098." evidence="8">
    <original>L</original>
    <variation>P</variation>
    <location>
        <position position="291"/>
    </location>
</feature>
<feature type="sequence variant" id="VAR_023923" description="In dbSNP:rs73572838." evidence="6">
    <original>R</original>
    <variation>H</variation>
    <location>
        <position position="314"/>
    </location>
</feature>
<feature type="sequence variant" id="VAR_070993" description="In SCAR12; dbSNP:rs587777127." evidence="23">
    <original>G</original>
    <variation>R</variation>
    <location>
        <position position="372"/>
    </location>
</feature>
<feature type="mutagenesis site" description="No effect on interaction with TP53. Abolishes interaction with MAPK8; when associated with V-29." evidence="9">
    <original>K</original>
    <variation>T</variation>
    <location>
        <position position="28"/>
    </location>
</feature>
<feature type="mutagenesis site" description="No effect on interaction with TP53. Abolishes interaction with MAPK8; when associated with T-28." evidence="9">
    <original>D</original>
    <variation>V</variation>
    <location>
        <position position="29"/>
    </location>
</feature>
<feature type="mutagenesis site" description="Loss of phosphorylation." evidence="9 12">
    <original>Y</original>
    <variation>F</variation>
    <location>
        <position position="33"/>
    </location>
</feature>
<feature type="mutagenesis site" description="Abolishes interaction with TP53, TP73, MAPK8 and ERBB4. Partial loss of interaction with TFAP2C. Loss of phosphorylation. Loss of the proapoptotic activity. Abolishes binding to VOPP1." evidence="9 12 26">
    <original>Y</original>
    <variation>R</variation>
    <location>
        <position position="33"/>
    </location>
</feature>
<feature type="mutagenesis site" description="Abolishes interaction with LITAF." evidence="11">
    <original>WEHP</original>
    <variation>FEHA</variation>
    <location>
        <begin position="44"/>
        <end position="47"/>
    </location>
</feature>
<feature type="mutagenesis site" description="No effect on interaction with TP73." evidence="12">
    <original>Y</original>
    <variation>R</variation>
    <location>
        <position position="61"/>
    </location>
</feature>
<feature type="mutagenesis site" description="No effect on interaction with LITAF." evidence="11">
    <original>YLDP</original>
    <variation>ALDA</variation>
    <location>
        <begin position="85"/>
        <end position="88"/>
    </location>
</feature>
<feature type="mutagenesis site" description="Loss of phosphorylation by TNK2." evidence="19">
    <original>Y</original>
    <variation>A</variation>
    <location>
        <position position="287"/>
    </location>
</feature>
<feature type="strand" evidence="34">
    <location>
        <begin position="63"/>
        <end position="67"/>
    </location>
</feature>
<feature type="strand" evidence="34">
    <location>
        <begin position="73"/>
        <end position="80"/>
    </location>
</feature>
<feature type="strand" evidence="34">
    <location>
        <begin position="83"/>
        <end position="86"/>
    </location>
</feature>
<feature type="sequence variant" id="VAR_082915" description="Found in a primary colorectal tumor and tumor cells; dbSNP:rs77067228." evidence="32">
    <original>K</original>
    <variation>E</variation>
    <location sequence="Q9NZC7-3">
        <position position="182"/>
    </location>
</feature>
<protein>
    <recommendedName>
        <fullName>WW domain-containing oxidoreductase</fullName>
        <ecNumber>1.1.1.-</ecNumber>
    </recommendedName>
    <alternativeName>
        <fullName>Fragile site FRA16D oxidoreductase</fullName>
    </alternativeName>
    <alternativeName>
        <fullName>Short chain dehydrogenase/reductase family 41C member 1</fullName>
    </alternativeName>
</protein>
<gene>
    <name type="primary">WWOX</name>
    <name type="synonym">FOR</name>
    <name type="synonym">SDR41C1</name>
    <name type="synonym">WOX1</name>
</gene>
<accession>Q9NZC7</accession>
<accession>A8K323</accession>
<accession>Q5MYT5</accession>
<accession>Q96KM3</accession>
<accession>Q96RF2</accession>
<accession>Q9BTT8</accession>
<accession>Q9NPC9</accession>
<accession>Q9NRF4</accession>
<accession>Q9NRF5</accession>
<accession>Q9NRF6</accession>
<accession>Q9NRK1</accession>
<accession>Q9NZC5</accession>
<sequence length="414" mass="46677">MAALRYAGLDDTDSEDELPPGWEERTTKDGWVYYANHTEEKTQWEHPKTGKRKRVAGDLPYGWEQETDENGQVFFVDHINKRTTYLDPRLAFTVDDNPTKPTTRQRYDGSTTAMEILQGRDFTGKVVVVTGANSGIGFETAKSFALHGAHVILACRNMARASEAVSRILEEWHKAKVEAMTLDLALLRSVQHFAEAFKAKNVPLHVLVCNAATFALPWSLTKDGLETTFQVNHLGHFYLVQLLQDVLCRSAPARVIVVSSESHRFTDINDSLGKLDFSRLSPTKNDYWAMLAYNRSKLCNILFSNELHRRLSPRGVTSNAVHPGNMMYSNIHRSWWVYTLLFTLARPFTKSMQQGAATTVYCAAVPELEGLGGMYFNNCCRCMPSPEAQSEETARTLWALSERLIQERLGSQSG</sequence>
<organism>
    <name type="scientific">Homo sapiens</name>
    <name type="common">Human</name>
    <dbReference type="NCBI Taxonomy" id="9606"/>
    <lineage>
        <taxon>Eukaryota</taxon>
        <taxon>Metazoa</taxon>
        <taxon>Chordata</taxon>
        <taxon>Craniata</taxon>
        <taxon>Vertebrata</taxon>
        <taxon>Euteleostomi</taxon>
        <taxon>Mammalia</taxon>
        <taxon>Eutheria</taxon>
        <taxon>Euarchontoglires</taxon>
        <taxon>Primates</taxon>
        <taxon>Haplorrhini</taxon>
        <taxon>Catarrhini</taxon>
        <taxon>Hominidae</taxon>
        <taxon>Homo</taxon>
    </lineage>
</organism>